<feature type="initiator methionine" description="Removed" evidence="10 16">
    <location>
        <position position="1"/>
    </location>
</feature>
<feature type="chain" id="PRO_0000128456" description="Small ribosomal subunit protein uS17">
    <location>
        <begin position="2"/>
        <end position="84"/>
    </location>
</feature>
<feature type="sequence variant" description="In neamine-resistant mutant nea301." evidence="14 15">
    <original>H</original>
    <variation>P</variation>
    <location>
        <position position="31"/>
    </location>
</feature>
<feature type="sequence variant" description="Prevents 30S subunit assembly at 42 degrees Celsius." evidence="3">
    <original>S</original>
    <variation>F</variation>
    <location>
        <position position="68"/>
    </location>
</feature>
<feature type="sequence conflict" description="In Ref. 4; AA sequence." evidence="18" ref="4">
    <original>CGIGDVV</original>
    <variation>GIGDVVC</variation>
    <location>
        <begin position="53"/>
        <end position="59"/>
    </location>
</feature>
<feature type="strand" evidence="20">
    <location>
        <begin position="8"/>
        <end position="14"/>
    </location>
</feature>
<feature type="strand" evidence="20">
    <location>
        <begin position="20"/>
        <end position="30"/>
    </location>
</feature>
<feature type="turn" evidence="20">
    <location>
        <begin position="32"/>
        <end position="34"/>
    </location>
</feature>
<feature type="strand" evidence="20">
    <location>
        <begin position="37"/>
        <end position="47"/>
    </location>
</feature>
<feature type="helix" evidence="19">
    <location>
        <begin position="49"/>
        <end position="51"/>
    </location>
</feature>
<feature type="strand" evidence="20">
    <location>
        <begin position="58"/>
        <end position="63"/>
    </location>
</feature>
<feature type="strand" evidence="20">
    <location>
        <begin position="68"/>
        <end position="80"/>
    </location>
</feature>
<protein>
    <recommendedName>
        <fullName evidence="1 17">Small ribosomal subunit protein uS17</fullName>
    </recommendedName>
    <alternativeName>
        <fullName>30S ribosomal protein S17</fullName>
    </alternativeName>
</protein>
<sequence length="84" mass="9704">MTDKIRTLQGRVVSDKMEKSIVVAIERFVKHPIYGKFIKRTTKLHVHDENNECGIGDVVEIRECRPLSKTKSWTLVRVVEKAVL</sequence>
<proteinExistence type="evidence at protein level"/>
<comment type="function">
    <text evidence="12 14 15">One of the primary rRNA binding proteins, it binds specifically to the 5'-end of 16S ribosomal RNA (PubMed:4598121). Also plays a role in translational accuracy; neamine-resistant ribosomes show reduced neamine-induced misreading in vitro (PubMed:765484, PubMed:781296).</text>
</comment>
<comment type="subunit">
    <text evidence="2 4 5 6 7 8 9 10 12 13">Part of the 30S ribosomal subunit (PubMed:10094780, PubMed:12244297, PubMed:12809609, PubMed:16272117, PubMed:27906160, PubMed:27906161, PubMed:27934701, PubMed:344065, PubMed:4598121, PubMed:7556101).</text>
</comment>
<comment type="mass spectrometry" mass="9573.0" method="MALDI" evidence="2"/>
<comment type="miscellaneous">
    <text evidence="11">The strain missing both S17 and L29 grows very slowly and has a rather unstable temperature-sensitive phenotype.</text>
</comment>
<comment type="similarity">
    <text evidence="1">Belongs to the universal ribosomal protein uS17 family.</text>
</comment>
<dbReference type="EMBL" id="X02613">
    <property type="protein sequence ID" value="CAA26469.1"/>
    <property type="molecule type" value="Genomic_DNA"/>
</dbReference>
<dbReference type="EMBL" id="U18997">
    <property type="protein sequence ID" value="AAA58108.1"/>
    <property type="molecule type" value="Genomic_DNA"/>
</dbReference>
<dbReference type="EMBL" id="U00096">
    <property type="protein sequence ID" value="AAC76336.1"/>
    <property type="molecule type" value="Genomic_DNA"/>
</dbReference>
<dbReference type="EMBL" id="AP009048">
    <property type="protein sequence ID" value="BAE77980.1"/>
    <property type="molecule type" value="Genomic_DNA"/>
</dbReference>
<dbReference type="EMBL" id="V00357">
    <property type="protein sequence ID" value="CAA23652.1"/>
    <property type="molecule type" value="Genomic_DNA"/>
</dbReference>
<dbReference type="EMBL" id="X01563">
    <property type="protein sequence ID" value="CAA25714.1"/>
    <property type="molecule type" value="Genomic_DNA"/>
</dbReference>
<dbReference type="PIR" id="A37519">
    <property type="entry name" value="R3EC17"/>
</dbReference>
<dbReference type="RefSeq" id="NP_417770.1">
    <property type="nucleotide sequence ID" value="NC_000913.3"/>
</dbReference>
<dbReference type="RefSeq" id="WP_000130100.1">
    <property type="nucleotide sequence ID" value="NZ_STEB01000038.1"/>
</dbReference>
<dbReference type="PDB" id="1EG0">
    <property type="method" value="EM"/>
    <property type="resolution" value="11.50 A"/>
    <property type="chains" value="G=2-84"/>
</dbReference>
<dbReference type="PDB" id="2YKR">
    <property type="method" value="EM"/>
    <property type="resolution" value="9.80 A"/>
    <property type="chains" value="Q=4-83"/>
</dbReference>
<dbReference type="PDB" id="3IY8">
    <property type="method" value="EM"/>
    <property type="resolution" value="14.10 A"/>
    <property type="chains" value="Q=4-83"/>
</dbReference>
<dbReference type="PDB" id="3J9Y">
    <property type="method" value="EM"/>
    <property type="resolution" value="3.90 A"/>
    <property type="chains" value="q=1-84"/>
</dbReference>
<dbReference type="PDB" id="3J9Z">
    <property type="method" value="EM"/>
    <property type="resolution" value="3.60 A"/>
    <property type="chains" value="SQ=2-84"/>
</dbReference>
<dbReference type="PDB" id="3JA1">
    <property type="method" value="EM"/>
    <property type="resolution" value="3.60 A"/>
    <property type="chains" value="SQ=2-84"/>
</dbReference>
<dbReference type="PDB" id="3JBU">
    <property type="method" value="EM"/>
    <property type="resolution" value="3.64 A"/>
    <property type="chains" value="Q=1-84"/>
</dbReference>
<dbReference type="PDB" id="3JBV">
    <property type="method" value="EM"/>
    <property type="resolution" value="3.32 A"/>
    <property type="chains" value="Q=1-84"/>
</dbReference>
<dbReference type="PDB" id="3JCD">
    <property type="method" value="EM"/>
    <property type="resolution" value="3.70 A"/>
    <property type="chains" value="q=1-84"/>
</dbReference>
<dbReference type="PDB" id="3JCE">
    <property type="method" value="EM"/>
    <property type="resolution" value="3.20 A"/>
    <property type="chains" value="q=1-84"/>
</dbReference>
<dbReference type="PDB" id="3JCJ">
    <property type="method" value="EM"/>
    <property type="resolution" value="3.70 A"/>
    <property type="chains" value="x=1-84"/>
</dbReference>
<dbReference type="PDB" id="3JCN">
    <property type="method" value="EM"/>
    <property type="resolution" value="4.60 A"/>
    <property type="chains" value="r=1-84"/>
</dbReference>
<dbReference type="PDB" id="4A2I">
    <property type="method" value="EM"/>
    <property type="resolution" value="16.50 A"/>
    <property type="chains" value="Q=4-83"/>
</dbReference>
<dbReference type="PDB" id="4ADV">
    <property type="method" value="EM"/>
    <property type="resolution" value="13.50 A"/>
    <property type="chains" value="Q=2-84"/>
</dbReference>
<dbReference type="PDB" id="4U1U">
    <property type="method" value="X-ray"/>
    <property type="resolution" value="2.95 A"/>
    <property type="chains" value="AQ/CQ=4-83"/>
</dbReference>
<dbReference type="PDB" id="4U1V">
    <property type="method" value="X-ray"/>
    <property type="resolution" value="3.00 A"/>
    <property type="chains" value="AQ/CQ=4-83"/>
</dbReference>
<dbReference type="PDB" id="4U20">
    <property type="method" value="X-ray"/>
    <property type="resolution" value="2.90 A"/>
    <property type="chains" value="AQ/CQ=4-83"/>
</dbReference>
<dbReference type="PDB" id="4U24">
    <property type="method" value="X-ray"/>
    <property type="resolution" value="2.90 A"/>
    <property type="chains" value="AQ/CQ=4-83"/>
</dbReference>
<dbReference type="PDB" id="4U25">
    <property type="method" value="X-ray"/>
    <property type="resolution" value="2.90 A"/>
    <property type="chains" value="AQ/CQ=4-83"/>
</dbReference>
<dbReference type="PDB" id="4U26">
    <property type="method" value="X-ray"/>
    <property type="resolution" value="2.80 A"/>
    <property type="chains" value="AQ/CQ=4-83"/>
</dbReference>
<dbReference type="PDB" id="4U27">
    <property type="method" value="X-ray"/>
    <property type="resolution" value="2.80 A"/>
    <property type="chains" value="AQ/CQ=4-83"/>
</dbReference>
<dbReference type="PDB" id="4V47">
    <property type="method" value="EM"/>
    <property type="resolution" value="12.30 A"/>
    <property type="chains" value="BQ=2-84"/>
</dbReference>
<dbReference type="PDB" id="4V48">
    <property type="method" value="EM"/>
    <property type="resolution" value="11.50 A"/>
    <property type="chains" value="BQ=2-84"/>
</dbReference>
<dbReference type="PDB" id="4V4H">
    <property type="method" value="X-ray"/>
    <property type="resolution" value="3.46 A"/>
    <property type="chains" value="AQ/CQ=1-84"/>
</dbReference>
<dbReference type="PDB" id="4V4Q">
    <property type="method" value="X-ray"/>
    <property type="resolution" value="3.46 A"/>
    <property type="chains" value="AQ/CQ=2-84"/>
</dbReference>
<dbReference type="PDB" id="4V4V">
    <property type="method" value="EM"/>
    <property type="resolution" value="15.00 A"/>
    <property type="chains" value="AQ=6-84"/>
</dbReference>
<dbReference type="PDB" id="4V4W">
    <property type="method" value="EM"/>
    <property type="resolution" value="15.00 A"/>
    <property type="chains" value="AQ=6-84"/>
</dbReference>
<dbReference type="PDB" id="4V50">
    <property type="method" value="X-ray"/>
    <property type="resolution" value="3.22 A"/>
    <property type="chains" value="AQ/CQ=2-84"/>
</dbReference>
<dbReference type="PDB" id="4V52">
    <property type="method" value="X-ray"/>
    <property type="resolution" value="3.21 A"/>
    <property type="chains" value="AQ/CQ=2-84"/>
</dbReference>
<dbReference type="PDB" id="4V53">
    <property type="method" value="X-ray"/>
    <property type="resolution" value="3.54 A"/>
    <property type="chains" value="AQ/CQ=2-84"/>
</dbReference>
<dbReference type="PDB" id="4V54">
    <property type="method" value="X-ray"/>
    <property type="resolution" value="3.30 A"/>
    <property type="chains" value="AQ/CQ=2-84"/>
</dbReference>
<dbReference type="PDB" id="4V55">
    <property type="method" value="X-ray"/>
    <property type="resolution" value="4.00 A"/>
    <property type="chains" value="AQ/CQ=2-84"/>
</dbReference>
<dbReference type="PDB" id="4V56">
    <property type="method" value="X-ray"/>
    <property type="resolution" value="3.93 A"/>
    <property type="chains" value="AQ/CQ=2-84"/>
</dbReference>
<dbReference type="PDB" id="4V57">
    <property type="method" value="X-ray"/>
    <property type="resolution" value="3.50 A"/>
    <property type="chains" value="AQ/CQ=2-84"/>
</dbReference>
<dbReference type="PDB" id="4V5B">
    <property type="method" value="X-ray"/>
    <property type="resolution" value="3.74 A"/>
    <property type="chains" value="BQ/DQ=2-84"/>
</dbReference>
<dbReference type="PDB" id="4V5H">
    <property type="method" value="EM"/>
    <property type="resolution" value="5.80 A"/>
    <property type="chains" value="AQ=4-83"/>
</dbReference>
<dbReference type="PDB" id="4V5Y">
    <property type="method" value="X-ray"/>
    <property type="resolution" value="4.45 A"/>
    <property type="chains" value="AQ/CQ=2-84"/>
</dbReference>
<dbReference type="PDB" id="4V64">
    <property type="method" value="X-ray"/>
    <property type="resolution" value="3.50 A"/>
    <property type="chains" value="AQ/CQ=2-84"/>
</dbReference>
<dbReference type="PDB" id="4V65">
    <property type="method" value="EM"/>
    <property type="resolution" value="9.00 A"/>
    <property type="chains" value="AJ=1-84"/>
</dbReference>
<dbReference type="PDB" id="4V66">
    <property type="method" value="EM"/>
    <property type="resolution" value="9.00 A"/>
    <property type="chains" value="AJ=1-84"/>
</dbReference>
<dbReference type="PDB" id="4V69">
    <property type="method" value="EM"/>
    <property type="resolution" value="6.70 A"/>
    <property type="chains" value="AQ=4-83"/>
</dbReference>
<dbReference type="PDB" id="4V6C">
    <property type="method" value="X-ray"/>
    <property type="resolution" value="3.19 A"/>
    <property type="chains" value="AQ/CQ=1-84"/>
</dbReference>
<dbReference type="PDB" id="4V6D">
    <property type="method" value="X-ray"/>
    <property type="resolution" value="3.81 A"/>
    <property type="chains" value="AQ/CQ=1-84"/>
</dbReference>
<dbReference type="PDB" id="4V6E">
    <property type="method" value="X-ray"/>
    <property type="resolution" value="3.71 A"/>
    <property type="chains" value="AQ/CQ=1-84"/>
</dbReference>
<dbReference type="PDB" id="4V6K">
    <property type="method" value="EM"/>
    <property type="resolution" value="8.25 A"/>
    <property type="chains" value="BU=1-84"/>
</dbReference>
<dbReference type="PDB" id="4V6L">
    <property type="method" value="EM"/>
    <property type="resolution" value="13.20 A"/>
    <property type="chains" value="AU=1-84"/>
</dbReference>
<dbReference type="PDB" id="4V6M">
    <property type="method" value="EM"/>
    <property type="resolution" value="7.10 A"/>
    <property type="chains" value="AQ=2-84"/>
</dbReference>
<dbReference type="PDB" id="4V6N">
    <property type="method" value="EM"/>
    <property type="resolution" value="12.10 A"/>
    <property type="chains" value="BT=2-84"/>
</dbReference>
<dbReference type="PDB" id="4V6O">
    <property type="method" value="EM"/>
    <property type="resolution" value="14.70 A"/>
    <property type="chains" value="AT=2-84"/>
</dbReference>
<dbReference type="PDB" id="4V6P">
    <property type="method" value="EM"/>
    <property type="resolution" value="13.50 A"/>
    <property type="chains" value="AT=2-84"/>
</dbReference>
<dbReference type="PDB" id="4V6Q">
    <property type="method" value="EM"/>
    <property type="resolution" value="11.50 A"/>
    <property type="chains" value="AT=2-84"/>
</dbReference>
<dbReference type="PDB" id="4V6R">
    <property type="method" value="EM"/>
    <property type="resolution" value="11.50 A"/>
    <property type="chains" value="AT=2-84"/>
</dbReference>
<dbReference type="PDB" id="4V6S">
    <property type="method" value="EM"/>
    <property type="resolution" value="13.10 A"/>
    <property type="chains" value="BS=2-84"/>
</dbReference>
<dbReference type="PDB" id="4V6T">
    <property type="method" value="EM"/>
    <property type="resolution" value="8.30 A"/>
    <property type="chains" value="AQ=4-83"/>
</dbReference>
<dbReference type="PDB" id="4V6V">
    <property type="method" value="EM"/>
    <property type="resolution" value="9.80 A"/>
    <property type="chains" value="AQ=2-84"/>
</dbReference>
<dbReference type="PDB" id="4V6Y">
    <property type="method" value="EM"/>
    <property type="resolution" value="12.00 A"/>
    <property type="chains" value="AQ=4-83"/>
</dbReference>
<dbReference type="PDB" id="4V6Z">
    <property type="method" value="EM"/>
    <property type="resolution" value="12.00 A"/>
    <property type="chains" value="AQ=4-83"/>
</dbReference>
<dbReference type="PDB" id="4V70">
    <property type="method" value="EM"/>
    <property type="resolution" value="17.00 A"/>
    <property type="chains" value="AQ=4-83"/>
</dbReference>
<dbReference type="PDB" id="4V71">
    <property type="method" value="EM"/>
    <property type="resolution" value="20.00 A"/>
    <property type="chains" value="AQ=4-83"/>
</dbReference>
<dbReference type="PDB" id="4V72">
    <property type="method" value="EM"/>
    <property type="resolution" value="13.00 A"/>
    <property type="chains" value="AQ=4-83"/>
</dbReference>
<dbReference type="PDB" id="4V73">
    <property type="method" value="EM"/>
    <property type="resolution" value="15.00 A"/>
    <property type="chains" value="AQ=4-83"/>
</dbReference>
<dbReference type="PDB" id="4V74">
    <property type="method" value="EM"/>
    <property type="resolution" value="17.00 A"/>
    <property type="chains" value="AQ=4-83"/>
</dbReference>
<dbReference type="PDB" id="4V75">
    <property type="method" value="EM"/>
    <property type="resolution" value="12.00 A"/>
    <property type="chains" value="AQ=4-83"/>
</dbReference>
<dbReference type="PDB" id="4V76">
    <property type="method" value="EM"/>
    <property type="resolution" value="17.00 A"/>
    <property type="chains" value="AQ=4-83"/>
</dbReference>
<dbReference type="PDB" id="4V77">
    <property type="method" value="EM"/>
    <property type="resolution" value="17.00 A"/>
    <property type="chains" value="AQ=4-83"/>
</dbReference>
<dbReference type="PDB" id="4V78">
    <property type="method" value="EM"/>
    <property type="resolution" value="20.00 A"/>
    <property type="chains" value="AQ=4-83"/>
</dbReference>
<dbReference type="PDB" id="4V79">
    <property type="method" value="EM"/>
    <property type="resolution" value="15.00 A"/>
    <property type="chains" value="AQ=4-83"/>
</dbReference>
<dbReference type="PDB" id="4V7A">
    <property type="method" value="EM"/>
    <property type="resolution" value="9.00 A"/>
    <property type="chains" value="AQ=4-83"/>
</dbReference>
<dbReference type="PDB" id="4V7B">
    <property type="method" value="EM"/>
    <property type="resolution" value="6.80 A"/>
    <property type="chains" value="AQ=1-84"/>
</dbReference>
<dbReference type="PDB" id="4V7C">
    <property type="method" value="EM"/>
    <property type="resolution" value="7.60 A"/>
    <property type="chains" value="AQ=2-84"/>
</dbReference>
<dbReference type="PDB" id="4V7D">
    <property type="method" value="EM"/>
    <property type="resolution" value="7.60 A"/>
    <property type="chains" value="BQ=2-84"/>
</dbReference>
<dbReference type="PDB" id="4V7I">
    <property type="method" value="EM"/>
    <property type="resolution" value="9.60 A"/>
    <property type="chains" value="BQ=1-84"/>
</dbReference>
<dbReference type="PDB" id="4V7S">
    <property type="method" value="X-ray"/>
    <property type="resolution" value="3.25 A"/>
    <property type="chains" value="AQ/CQ=4-83"/>
</dbReference>
<dbReference type="PDB" id="4V7T">
    <property type="method" value="X-ray"/>
    <property type="resolution" value="3.19 A"/>
    <property type="chains" value="AQ/CQ=4-83"/>
</dbReference>
<dbReference type="PDB" id="4V7U">
    <property type="method" value="X-ray"/>
    <property type="resolution" value="3.10 A"/>
    <property type="chains" value="AQ/CQ=4-83"/>
</dbReference>
<dbReference type="PDB" id="4V7V">
    <property type="method" value="X-ray"/>
    <property type="resolution" value="3.29 A"/>
    <property type="chains" value="AQ/CQ=4-83"/>
</dbReference>
<dbReference type="PDB" id="4V85">
    <property type="method" value="X-ray"/>
    <property type="resolution" value="3.20 A"/>
    <property type="chains" value="AQ=1-84"/>
</dbReference>
<dbReference type="PDB" id="4V89">
    <property type="method" value="X-ray"/>
    <property type="resolution" value="3.70 A"/>
    <property type="chains" value="AQ=1-84"/>
</dbReference>
<dbReference type="PDB" id="4V9C">
    <property type="method" value="X-ray"/>
    <property type="resolution" value="3.30 A"/>
    <property type="chains" value="AQ/CQ=1-84"/>
</dbReference>
<dbReference type="PDB" id="4V9D">
    <property type="method" value="X-ray"/>
    <property type="resolution" value="3.00 A"/>
    <property type="chains" value="AQ/BQ=4-83"/>
</dbReference>
<dbReference type="PDB" id="4V9O">
    <property type="method" value="X-ray"/>
    <property type="resolution" value="2.90 A"/>
    <property type="chains" value="BQ/DQ/FQ/HQ=1-84"/>
</dbReference>
<dbReference type="PDB" id="4V9P">
    <property type="method" value="X-ray"/>
    <property type="resolution" value="2.90 A"/>
    <property type="chains" value="BQ/DQ/FQ/HQ=1-84"/>
</dbReference>
<dbReference type="PDB" id="4WF1">
    <property type="method" value="X-ray"/>
    <property type="resolution" value="3.09 A"/>
    <property type="chains" value="AQ/CQ=4-83"/>
</dbReference>
<dbReference type="PDB" id="4WOI">
    <property type="method" value="X-ray"/>
    <property type="resolution" value="3.00 A"/>
    <property type="chains" value="AQ/DQ=1-84"/>
</dbReference>
<dbReference type="PDB" id="4WWW">
    <property type="method" value="X-ray"/>
    <property type="resolution" value="3.10 A"/>
    <property type="chains" value="QQ/XQ=4-83"/>
</dbReference>
<dbReference type="PDB" id="4YBB">
    <property type="method" value="X-ray"/>
    <property type="resolution" value="2.10 A"/>
    <property type="chains" value="AQ/BQ=4-83"/>
</dbReference>
<dbReference type="PDB" id="5AFI">
    <property type="method" value="EM"/>
    <property type="resolution" value="2.90 A"/>
    <property type="chains" value="q=1-84"/>
</dbReference>
<dbReference type="PDB" id="5H5U">
    <property type="method" value="EM"/>
    <property type="resolution" value="3.00 A"/>
    <property type="chains" value="x=2-84"/>
</dbReference>
<dbReference type="PDB" id="5IQR">
    <property type="method" value="EM"/>
    <property type="resolution" value="3.00 A"/>
    <property type="chains" value="v=1-84"/>
</dbReference>
<dbReference type="PDB" id="5IT8">
    <property type="method" value="X-ray"/>
    <property type="resolution" value="3.12 A"/>
    <property type="chains" value="AQ/BQ=4-83"/>
</dbReference>
<dbReference type="PDB" id="5J5B">
    <property type="method" value="X-ray"/>
    <property type="resolution" value="2.80 A"/>
    <property type="chains" value="AQ/BQ=4-83"/>
</dbReference>
<dbReference type="PDB" id="5J7L">
    <property type="method" value="X-ray"/>
    <property type="resolution" value="3.00 A"/>
    <property type="chains" value="AQ/BQ=4-83"/>
</dbReference>
<dbReference type="PDB" id="5J88">
    <property type="method" value="X-ray"/>
    <property type="resolution" value="3.32 A"/>
    <property type="chains" value="AQ/BQ=4-83"/>
</dbReference>
<dbReference type="PDB" id="5J8A">
    <property type="method" value="X-ray"/>
    <property type="resolution" value="3.10 A"/>
    <property type="chains" value="AQ/BQ=4-83"/>
</dbReference>
<dbReference type="PDB" id="5J91">
    <property type="method" value="X-ray"/>
    <property type="resolution" value="2.96 A"/>
    <property type="chains" value="AQ/BQ=4-83"/>
</dbReference>
<dbReference type="PDB" id="5JC9">
    <property type="method" value="X-ray"/>
    <property type="resolution" value="3.03 A"/>
    <property type="chains" value="AQ/BQ=4-83"/>
</dbReference>
<dbReference type="PDB" id="5JTE">
    <property type="method" value="EM"/>
    <property type="resolution" value="3.60 A"/>
    <property type="chains" value="AQ=1-84"/>
</dbReference>
<dbReference type="PDB" id="5JU8">
    <property type="method" value="EM"/>
    <property type="resolution" value="3.60 A"/>
    <property type="chains" value="AQ=1-84"/>
</dbReference>
<dbReference type="PDB" id="5KCR">
    <property type="method" value="EM"/>
    <property type="resolution" value="3.60 A"/>
    <property type="chains" value="1q=1-84"/>
</dbReference>
<dbReference type="PDB" id="5KCS">
    <property type="method" value="EM"/>
    <property type="resolution" value="3.90 A"/>
    <property type="chains" value="1q=1-84"/>
</dbReference>
<dbReference type="PDB" id="5KPS">
    <property type="method" value="EM"/>
    <property type="resolution" value="3.90 A"/>
    <property type="chains" value="22=1-84"/>
</dbReference>
<dbReference type="PDB" id="5KPV">
    <property type="method" value="EM"/>
    <property type="resolution" value="4.10 A"/>
    <property type="chains" value="21=1-84"/>
</dbReference>
<dbReference type="PDB" id="5KPW">
    <property type="method" value="EM"/>
    <property type="resolution" value="3.90 A"/>
    <property type="chains" value="21=1-84"/>
</dbReference>
<dbReference type="PDB" id="5KPX">
    <property type="method" value="EM"/>
    <property type="resolution" value="3.90 A"/>
    <property type="chains" value="21=1-84"/>
</dbReference>
<dbReference type="PDB" id="5L3P">
    <property type="method" value="EM"/>
    <property type="resolution" value="3.70 A"/>
    <property type="chains" value="q=1-84"/>
</dbReference>
<dbReference type="PDB" id="5LZA">
    <property type="method" value="EM"/>
    <property type="resolution" value="3.60 A"/>
    <property type="chains" value="q=4-83"/>
</dbReference>
<dbReference type="PDB" id="5LZB">
    <property type="method" value="EM"/>
    <property type="resolution" value="5.30 A"/>
    <property type="chains" value="q=4-83"/>
</dbReference>
<dbReference type="PDB" id="5LZC">
    <property type="method" value="EM"/>
    <property type="resolution" value="4.80 A"/>
    <property type="chains" value="q=4-83"/>
</dbReference>
<dbReference type="PDB" id="5LZD">
    <property type="method" value="EM"/>
    <property type="resolution" value="3.40 A"/>
    <property type="chains" value="q=4-83"/>
</dbReference>
<dbReference type="PDB" id="5LZE">
    <property type="method" value="EM"/>
    <property type="resolution" value="3.50 A"/>
    <property type="chains" value="q=4-83"/>
</dbReference>
<dbReference type="PDB" id="5LZF">
    <property type="method" value="EM"/>
    <property type="resolution" value="4.60 A"/>
    <property type="chains" value="q=4-83"/>
</dbReference>
<dbReference type="PDB" id="5MDV">
    <property type="method" value="EM"/>
    <property type="resolution" value="2.97 A"/>
    <property type="chains" value="v=1-84"/>
</dbReference>
<dbReference type="PDB" id="5MDW">
    <property type="method" value="EM"/>
    <property type="resolution" value="3.06 A"/>
    <property type="chains" value="v=1-84"/>
</dbReference>
<dbReference type="PDB" id="5MDY">
    <property type="method" value="EM"/>
    <property type="resolution" value="3.35 A"/>
    <property type="chains" value="v=1-84"/>
</dbReference>
<dbReference type="PDB" id="5MDZ">
    <property type="method" value="EM"/>
    <property type="resolution" value="3.10 A"/>
    <property type="chains" value="v=1-84"/>
</dbReference>
<dbReference type="PDB" id="5ME0">
    <property type="method" value="EM"/>
    <property type="resolution" value="13.50 A"/>
    <property type="chains" value="Q=1-84"/>
</dbReference>
<dbReference type="PDB" id="5ME1">
    <property type="method" value="EM"/>
    <property type="resolution" value="13.50 A"/>
    <property type="chains" value="Q=1-84"/>
</dbReference>
<dbReference type="PDB" id="5MGP">
    <property type="method" value="EM"/>
    <property type="resolution" value="3.10 A"/>
    <property type="chains" value="q=4-83"/>
</dbReference>
<dbReference type="PDB" id="5MY1">
    <property type="method" value="EM"/>
    <property type="resolution" value="7.60 A"/>
    <property type="chains" value="Q=2-84"/>
</dbReference>
<dbReference type="PDB" id="5NO2">
    <property type="method" value="EM"/>
    <property type="resolution" value="5.16 A"/>
    <property type="chains" value="Q=4-83"/>
</dbReference>
<dbReference type="PDB" id="5NO3">
    <property type="method" value="EM"/>
    <property type="resolution" value="5.16 A"/>
    <property type="chains" value="Q=4-83"/>
</dbReference>
<dbReference type="PDB" id="5NO4">
    <property type="method" value="EM"/>
    <property type="resolution" value="5.16 A"/>
    <property type="chains" value="Q=4-83"/>
</dbReference>
<dbReference type="PDB" id="5NP6">
    <property type="method" value="EM"/>
    <property type="resolution" value="3.60 A"/>
    <property type="chains" value="T=4-83"/>
</dbReference>
<dbReference type="PDB" id="5NWY">
    <property type="method" value="EM"/>
    <property type="resolution" value="2.93 A"/>
    <property type="chains" value="G=1-84"/>
</dbReference>
<dbReference type="PDB" id="5O2R">
    <property type="method" value="EM"/>
    <property type="resolution" value="3.40 A"/>
    <property type="chains" value="q=4-83"/>
</dbReference>
<dbReference type="PDB" id="5U4I">
    <property type="method" value="EM"/>
    <property type="resolution" value="3.50 A"/>
    <property type="chains" value="q=1-84"/>
</dbReference>
<dbReference type="PDB" id="5U9F">
    <property type="method" value="EM"/>
    <property type="resolution" value="3.20 A"/>
    <property type="chains" value="Q=1-84"/>
</dbReference>
<dbReference type="PDB" id="5U9G">
    <property type="method" value="EM"/>
    <property type="resolution" value="3.20 A"/>
    <property type="chains" value="Q=1-84"/>
</dbReference>
<dbReference type="PDB" id="5UYK">
    <property type="method" value="EM"/>
    <property type="resolution" value="3.90 A"/>
    <property type="chains" value="Q=4-83"/>
</dbReference>
<dbReference type="PDB" id="5UYL">
    <property type="method" value="EM"/>
    <property type="resolution" value="3.60 A"/>
    <property type="chains" value="Q=4-83"/>
</dbReference>
<dbReference type="PDB" id="5UYM">
    <property type="method" value="EM"/>
    <property type="resolution" value="3.20 A"/>
    <property type="chains" value="Q=4-83"/>
</dbReference>
<dbReference type="PDB" id="5UYN">
    <property type="method" value="EM"/>
    <property type="resolution" value="4.00 A"/>
    <property type="chains" value="Q=4-83"/>
</dbReference>
<dbReference type="PDB" id="5UYP">
    <property type="method" value="EM"/>
    <property type="resolution" value="3.90 A"/>
    <property type="chains" value="Q=4-83"/>
</dbReference>
<dbReference type="PDB" id="5UYQ">
    <property type="method" value="EM"/>
    <property type="resolution" value="3.80 A"/>
    <property type="chains" value="Q=4-83"/>
</dbReference>
<dbReference type="PDB" id="5UZ4">
    <property type="method" value="EM"/>
    <property type="resolution" value="5.80 A"/>
    <property type="chains" value="Q=1-84"/>
</dbReference>
<dbReference type="PDB" id="5WDT">
    <property type="method" value="EM"/>
    <property type="resolution" value="3.00 A"/>
    <property type="chains" value="q=4-83"/>
</dbReference>
<dbReference type="PDB" id="5WE4">
    <property type="method" value="EM"/>
    <property type="resolution" value="3.10 A"/>
    <property type="chains" value="q=4-83"/>
</dbReference>
<dbReference type="PDB" id="5WE6">
    <property type="method" value="EM"/>
    <property type="resolution" value="3.40 A"/>
    <property type="chains" value="q=4-83"/>
</dbReference>
<dbReference type="PDB" id="5WF0">
    <property type="method" value="EM"/>
    <property type="resolution" value="3.60 A"/>
    <property type="chains" value="q=4-83"/>
</dbReference>
<dbReference type="PDB" id="5WFK">
    <property type="method" value="EM"/>
    <property type="resolution" value="3.40 A"/>
    <property type="chains" value="q=4-83"/>
</dbReference>
<dbReference type="PDB" id="5WFS">
    <property type="method" value="EM"/>
    <property type="resolution" value="3.00 A"/>
    <property type="chains" value="q=4-83"/>
</dbReference>
<dbReference type="PDB" id="6AWB">
    <property type="method" value="EM"/>
    <property type="resolution" value="6.70 A"/>
    <property type="chains" value="T=4-83"/>
</dbReference>
<dbReference type="PDB" id="6AWC">
    <property type="method" value="EM"/>
    <property type="resolution" value="7.90 A"/>
    <property type="chains" value="T=4-83"/>
</dbReference>
<dbReference type="PDB" id="6AWD">
    <property type="method" value="EM"/>
    <property type="resolution" value="8.10 A"/>
    <property type="chains" value="T=4-83"/>
</dbReference>
<dbReference type="PDB" id="6BU8">
    <property type="method" value="EM"/>
    <property type="resolution" value="3.50 A"/>
    <property type="chains" value="Q=4-83"/>
</dbReference>
<dbReference type="PDB" id="6BY1">
    <property type="method" value="X-ray"/>
    <property type="resolution" value="3.94 A"/>
    <property type="chains" value="AQ/BQ=4-83"/>
</dbReference>
<dbReference type="PDB" id="6C4I">
    <property type="method" value="EM"/>
    <property type="resolution" value="3.24 A"/>
    <property type="chains" value="q=1-84"/>
</dbReference>
<dbReference type="PDB" id="6DNC">
    <property type="method" value="EM"/>
    <property type="resolution" value="3.70 A"/>
    <property type="chains" value="DB=1-84"/>
</dbReference>
<dbReference type="PDB" id="6ENF">
    <property type="method" value="EM"/>
    <property type="resolution" value="3.20 A"/>
    <property type="chains" value="q=4-83"/>
</dbReference>
<dbReference type="PDB" id="6ENJ">
    <property type="method" value="EM"/>
    <property type="resolution" value="3.70 A"/>
    <property type="chains" value="q=4-83"/>
</dbReference>
<dbReference type="PDB" id="6ENU">
    <property type="method" value="EM"/>
    <property type="resolution" value="3.10 A"/>
    <property type="chains" value="q=4-83"/>
</dbReference>
<dbReference type="PDB" id="6GWT">
    <property type="method" value="EM"/>
    <property type="resolution" value="3.80 A"/>
    <property type="chains" value="q=4-83"/>
</dbReference>
<dbReference type="PDB" id="6GXM">
    <property type="method" value="EM"/>
    <property type="resolution" value="3.80 A"/>
    <property type="chains" value="q=4-83"/>
</dbReference>
<dbReference type="PDB" id="6GXN">
    <property type="method" value="EM"/>
    <property type="resolution" value="3.90 A"/>
    <property type="chains" value="q=4-83"/>
</dbReference>
<dbReference type="PDB" id="6GXO">
    <property type="method" value="EM"/>
    <property type="resolution" value="3.90 A"/>
    <property type="chains" value="q=4-83"/>
</dbReference>
<dbReference type="PDB" id="6GXP">
    <property type="method" value="EM"/>
    <property type="resolution" value="4.40 A"/>
    <property type="chains" value="q=4-83"/>
</dbReference>
<dbReference type="PDB" id="6H4N">
    <property type="method" value="EM"/>
    <property type="resolution" value="3.00 A"/>
    <property type="chains" value="q=4-83"/>
</dbReference>
<dbReference type="PDB" id="6H58">
    <property type="method" value="EM"/>
    <property type="resolution" value="7.90 A"/>
    <property type="chains" value="q/qq=4-83"/>
</dbReference>
<dbReference type="PDB" id="6HRM">
    <property type="method" value="EM"/>
    <property type="resolution" value="2.96 A"/>
    <property type="chains" value="v=4-83"/>
</dbReference>
<dbReference type="PDB" id="6I7V">
    <property type="method" value="X-ray"/>
    <property type="resolution" value="2.90 A"/>
    <property type="chains" value="AQ/BQ=4-83"/>
</dbReference>
<dbReference type="PDB" id="6NQB">
    <property type="method" value="EM"/>
    <property type="resolution" value="3.80 A"/>
    <property type="chains" value="Q=4-82"/>
</dbReference>
<dbReference type="PDB" id="6O7K">
    <property type="method" value="EM"/>
    <property type="resolution" value="4.20 A"/>
    <property type="chains" value="P=4-83"/>
</dbReference>
<dbReference type="PDB" id="6O9J">
    <property type="method" value="EM"/>
    <property type="resolution" value="3.90 A"/>
    <property type="chains" value="q=4-83"/>
</dbReference>
<dbReference type="PDB" id="6O9K">
    <property type="method" value="EM"/>
    <property type="resolution" value="4.00 A"/>
    <property type="chains" value="q=4-83"/>
</dbReference>
<dbReference type="PDB" id="6OFX">
    <property type="method" value="EM"/>
    <property type="resolution" value="3.30 A"/>
    <property type="chains" value="V=4-83"/>
</dbReference>
<dbReference type="PDB" id="6OG7">
    <property type="method" value="EM"/>
    <property type="resolution" value="3.30 A"/>
    <property type="chains" value="V=4-83"/>
</dbReference>
<dbReference type="PDB" id="6OGF">
    <property type="method" value="EM"/>
    <property type="resolution" value="3.90 A"/>
    <property type="chains" value="V=1-84"/>
</dbReference>
<dbReference type="PDB" id="6OGG">
    <property type="method" value="EM"/>
    <property type="resolution" value="4.20 A"/>
    <property type="chains" value="V=1-84"/>
</dbReference>
<dbReference type="PDB" id="6OGI">
    <property type="method" value="EM"/>
    <property type="resolution" value="3.40 A"/>
    <property type="chains" value="V=1-84"/>
</dbReference>
<dbReference type="PDB" id="6OM6">
    <property type="method" value="EM"/>
    <property type="resolution" value="3.10 A"/>
    <property type="chains" value="v=1-84"/>
</dbReference>
<dbReference type="PDB" id="6ORE">
    <property type="method" value="EM"/>
    <property type="resolution" value="2.90 A"/>
    <property type="chains" value="v=4-83"/>
</dbReference>
<dbReference type="PDB" id="6ORL">
    <property type="method" value="EM"/>
    <property type="resolution" value="3.50 A"/>
    <property type="chains" value="v=4-83"/>
</dbReference>
<dbReference type="PDB" id="6OSK">
    <property type="method" value="EM"/>
    <property type="resolution" value="3.60 A"/>
    <property type="chains" value="v=4-83"/>
</dbReference>
<dbReference type="PDB" id="6OSQ">
    <property type="method" value="EM"/>
    <property type="resolution" value="3.50 A"/>
    <property type="chains" value="v=4-83"/>
</dbReference>
<dbReference type="PDB" id="6OST">
    <property type="method" value="EM"/>
    <property type="resolution" value="4.20 A"/>
    <property type="chains" value="v=4-83"/>
</dbReference>
<dbReference type="PDB" id="6OT3">
    <property type="method" value="EM"/>
    <property type="resolution" value="3.90 A"/>
    <property type="chains" value="v=4-83"/>
</dbReference>
<dbReference type="PDB" id="6OUO">
    <property type="method" value="EM"/>
    <property type="resolution" value="3.70 A"/>
    <property type="chains" value="v=4-83"/>
</dbReference>
<dbReference type="PDB" id="6Q97">
    <property type="method" value="EM"/>
    <property type="resolution" value="3.90 A"/>
    <property type="chains" value="v=4-83"/>
</dbReference>
<dbReference type="PDB" id="6Q98">
    <property type="method" value="EM"/>
    <property type="resolution" value="4.30 A"/>
    <property type="chains" value="v=1-84"/>
</dbReference>
<dbReference type="PDB" id="6Q9A">
    <property type="method" value="EM"/>
    <property type="resolution" value="3.70 A"/>
    <property type="chains" value="v=4-83"/>
</dbReference>
<dbReference type="PDB" id="6SZS">
    <property type="method" value="EM"/>
    <property type="resolution" value="3.06 A"/>
    <property type="chains" value="q=1-84"/>
</dbReference>
<dbReference type="PDB" id="6TBV">
    <property type="method" value="EM"/>
    <property type="resolution" value="2.70 A"/>
    <property type="chains" value="S171=1-84"/>
</dbReference>
<dbReference type="PDB" id="6TC3">
    <property type="method" value="EM"/>
    <property type="resolution" value="2.70 A"/>
    <property type="chains" value="S171=1-84"/>
</dbReference>
<dbReference type="PDB" id="6VU3">
    <property type="method" value="EM"/>
    <property type="resolution" value="3.70 A"/>
    <property type="chains" value="V=4-83"/>
</dbReference>
<dbReference type="PDB" id="6VWL">
    <property type="method" value="EM"/>
    <property type="resolution" value="3.10 A"/>
    <property type="chains" value="p=1-84"/>
</dbReference>
<dbReference type="PDB" id="6VWM">
    <property type="method" value="EM"/>
    <property type="resolution" value="3.40 A"/>
    <property type="chains" value="p=1-84"/>
</dbReference>
<dbReference type="PDB" id="6VWN">
    <property type="method" value="EM"/>
    <property type="resolution" value="3.40 A"/>
    <property type="chains" value="p=1-84"/>
</dbReference>
<dbReference type="PDB" id="6VYQ">
    <property type="method" value="EM"/>
    <property type="resolution" value="3.70 A"/>
    <property type="chains" value="V=1-84"/>
</dbReference>
<dbReference type="PDB" id="6VYR">
    <property type="method" value="EM"/>
    <property type="resolution" value="3.80 A"/>
    <property type="chains" value="V=1-84"/>
</dbReference>
<dbReference type="PDB" id="6VYS">
    <property type="method" value="EM"/>
    <property type="resolution" value="3.70 A"/>
    <property type="chains" value="V=1-84"/>
</dbReference>
<dbReference type="PDB" id="6VYT">
    <property type="method" value="EM"/>
    <property type="resolution" value="14.00 A"/>
    <property type="chains" value="V=1-84"/>
</dbReference>
<dbReference type="PDB" id="6VYU">
    <property type="method" value="EM"/>
    <property type="resolution" value="7.00 A"/>
    <property type="chains" value="V=1-84"/>
</dbReference>
<dbReference type="PDB" id="6VYW">
    <property type="method" value="EM"/>
    <property type="resolution" value="7.00 A"/>
    <property type="chains" value="V=1-84"/>
</dbReference>
<dbReference type="PDB" id="6VYX">
    <property type="method" value="EM"/>
    <property type="resolution" value="9.90 A"/>
    <property type="chains" value="V=1-84"/>
</dbReference>
<dbReference type="PDB" id="6VYY">
    <property type="method" value="EM"/>
    <property type="resolution" value="9.90 A"/>
    <property type="chains" value="V=1-84"/>
</dbReference>
<dbReference type="PDB" id="6VYZ">
    <property type="method" value="EM"/>
    <property type="resolution" value="9.90 A"/>
    <property type="chains" value="V=1-84"/>
</dbReference>
<dbReference type="PDB" id="6VZ2">
    <property type="method" value="EM"/>
    <property type="resolution" value="10.00 A"/>
    <property type="chains" value="V=1-84"/>
</dbReference>
<dbReference type="PDB" id="6VZ3">
    <property type="method" value="EM"/>
    <property type="resolution" value="8.90 A"/>
    <property type="chains" value="V=4-83"/>
</dbReference>
<dbReference type="PDB" id="6VZ5">
    <property type="method" value="EM"/>
    <property type="resolution" value="8.90 A"/>
    <property type="chains" value="V=1-84"/>
</dbReference>
<dbReference type="PDB" id="6VZ7">
    <property type="method" value="EM"/>
    <property type="resolution" value="7.00 A"/>
    <property type="chains" value="V=4-83"/>
</dbReference>
<dbReference type="PDB" id="6VZJ">
    <property type="method" value="EM"/>
    <property type="resolution" value="4.10 A"/>
    <property type="chains" value="V=1-84"/>
</dbReference>
<dbReference type="PDB" id="6W6K">
    <property type="method" value="EM"/>
    <property type="resolution" value="3.60 A"/>
    <property type="chains" value="Q=1-84"/>
</dbReference>
<dbReference type="PDB" id="6W77">
    <property type="method" value="EM"/>
    <property type="resolution" value="3.60 A"/>
    <property type="chains" value="Q=1-84"/>
</dbReference>
<dbReference type="PDB" id="6W7M">
    <property type="method" value="EM"/>
    <property type="resolution" value="3.80 A"/>
    <property type="chains" value="Q=1-84"/>
</dbReference>
<dbReference type="PDB" id="6W7N">
    <property type="method" value="EM"/>
    <property type="resolution" value="3.40 A"/>
    <property type="chains" value="Q=1-84"/>
</dbReference>
<dbReference type="PDB" id="6W7W">
    <property type="method" value="EM"/>
    <property type="resolution" value="3.90 A"/>
    <property type="chains" value="P=1-84"/>
</dbReference>
<dbReference type="PDB" id="6WD0">
    <property type="method" value="EM"/>
    <property type="resolution" value="3.00 A"/>
    <property type="chains" value="V=4-83"/>
</dbReference>
<dbReference type="PDB" id="6WD1">
    <property type="method" value="EM"/>
    <property type="resolution" value="3.30 A"/>
    <property type="chains" value="V=4-83"/>
</dbReference>
<dbReference type="PDB" id="6WD2">
    <property type="method" value="EM"/>
    <property type="resolution" value="3.60 A"/>
    <property type="chains" value="V=4-83"/>
</dbReference>
<dbReference type="PDB" id="6WD3">
    <property type="method" value="EM"/>
    <property type="resolution" value="3.60 A"/>
    <property type="chains" value="V=4-83"/>
</dbReference>
<dbReference type="PDB" id="6WD4">
    <property type="method" value="EM"/>
    <property type="resolution" value="3.70 A"/>
    <property type="chains" value="V=4-83"/>
</dbReference>
<dbReference type="PDB" id="6WD5">
    <property type="method" value="EM"/>
    <property type="resolution" value="3.60 A"/>
    <property type="chains" value="V=4-83"/>
</dbReference>
<dbReference type="PDB" id="6WD6">
    <property type="method" value="EM"/>
    <property type="resolution" value="3.70 A"/>
    <property type="chains" value="V=4-83"/>
</dbReference>
<dbReference type="PDB" id="6WD7">
    <property type="method" value="EM"/>
    <property type="resolution" value="3.90 A"/>
    <property type="chains" value="V=4-83"/>
</dbReference>
<dbReference type="PDB" id="6WD8">
    <property type="method" value="EM"/>
    <property type="resolution" value="3.70 A"/>
    <property type="chains" value="V=4-83"/>
</dbReference>
<dbReference type="PDB" id="6WD9">
    <property type="method" value="EM"/>
    <property type="resolution" value="3.70 A"/>
    <property type="chains" value="V=4-83"/>
</dbReference>
<dbReference type="PDB" id="6WDA">
    <property type="method" value="EM"/>
    <property type="resolution" value="3.80 A"/>
    <property type="chains" value="V=4-83"/>
</dbReference>
<dbReference type="PDB" id="6WDB">
    <property type="method" value="EM"/>
    <property type="resolution" value="4.00 A"/>
    <property type="chains" value="V=4-83"/>
</dbReference>
<dbReference type="PDB" id="6WDC">
    <property type="method" value="EM"/>
    <property type="resolution" value="4.20 A"/>
    <property type="chains" value="V=4-83"/>
</dbReference>
<dbReference type="PDB" id="6WDD">
    <property type="method" value="EM"/>
    <property type="resolution" value="3.20 A"/>
    <property type="chains" value="V=4-83"/>
</dbReference>
<dbReference type="PDB" id="6WDE">
    <property type="method" value="EM"/>
    <property type="resolution" value="3.00 A"/>
    <property type="chains" value="V=4-83"/>
</dbReference>
<dbReference type="PDB" id="6WDF">
    <property type="method" value="EM"/>
    <property type="resolution" value="3.30 A"/>
    <property type="chains" value="V=4-83"/>
</dbReference>
<dbReference type="PDB" id="6WDG">
    <property type="method" value="EM"/>
    <property type="resolution" value="3.30 A"/>
    <property type="chains" value="V=4-83"/>
</dbReference>
<dbReference type="PDB" id="6WDH">
    <property type="method" value="EM"/>
    <property type="resolution" value="4.30 A"/>
    <property type="chains" value="V=4-83"/>
</dbReference>
<dbReference type="PDB" id="6WDI">
    <property type="method" value="EM"/>
    <property type="resolution" value="4.00 A"/>
    <property type="chains" value="V=4-83"/>
</dbReference>
<dbReference type="PDB" id="6WDJ">
    <property type="method" value="EM"/>
    <property type="resolution" value="3.70 A"/>
    <property type="chains" value="V=4-83"/>
</dbReference>
<dbReference type="PDB" id="6WDK">
    <property type="method" value="EM"/>
    <property type="resolution" value="3.60 A"/>
    <property type="chains" value="V=4-83"/>
</dbReference>
<dbReference type="PDB" id="6WDL">
    <property type="method" value="EM"/>
    <property type="resolution" value="3.70 A"/>
    <property type="chains" value="V=4-83"/>
</dbReference>
<dbReference type="PDB" id="6WDM">
    <property type="method" value="EM"/>
    <property type="resolution" value="3.60 A"/>
    <property type="chains" value="V=4-83"/>
</dbReference>
<dbReference type="PDB" id="6WNV">
    <property type="method" value="EM"/>
    <property type="resolution" value="3.50 A"/>
    <property type="chains" value="V=4-83"/>
</dbReference>
<dbReference type="PDB" id="6WNW">
    <property type="method" value="EM"/>
    <property type="resolution" value="3.20 A"/>
    <property type="chains" value="V=4-83"/>
</dbReference>
<dbReference type="PDB" id="6X6T">
    <property type="method" value="EM"/>
    <property type="resolution" value="3.20 A"/>
    <property type="chains" value="V=1-84"/>
</dbReference>
<dbReference type="PDB" id="6X7F">
    <property type="method" value="EM"/>
    <property type="resolution" value="3.50 A"/>
    <property type="chains" value="V=1-84"/>
</dbReference>
<dbReference type="PDB" id="6X7K">
    <property type="method" value="EM"/>
    <property type="resolution" value="3.10 A"/>
    <property type="chains" value="V=1-84"/>
</dbReference>
<dbReference type="PDB" id="6X9Q">
    <property type="method" value="EM"/>
    <property type="resolution" value="4.80 A"/>
    <property type="chains" value="V=1-84"/>
</dbReference>
<dbReference type="PDB" id="6XDQ">
    <property type="method" value="EM"/>
    <property type="resolution" value="3.70 A"/>
    <property type="chains" value="V=1-84"/>
</dbReference>
<dbReference type="PDB" id="6XDR">
    <property type="method" value="EM"/>
    <property type="resolution" value="4.70 A"/>
    <property type="chains" value="V=1-84"/>
</dbReference>
<dbReference type="PDB" id="6XE0">
    <property type="method" value="EM"/>
    <property type="resolution" value="6.80 A"/>
    <property type="chains" value="Q=4-83"/>
</dbReference>
<dbReference type="PDB" id="6XGF">
    <property type="method" value="EM"/>
    <property type="resolution" value="5.00 A"/>
    <property type="chains" value="V=1-84"/>
</dbReference>
<dbReference type="PDB" id="6XII">
    <property type="method" value="EM"/>
    <property type="resolution" value="7.00 A"/>
    <property type="chains" value="V=1-84"/>
</dbReference>
<dbReference type="PDB" id="6XIJ">
    <property type="method" value="EM"/>
    <property type="resolution" value="8.00 A"/>
    <property type="chains" value="V=1-84"/>
</dbReference>
<dbReference type="PDB" id="6XZA">
    <property type="method" value="EM"/>
    <property type="resolution" value="2.66 A"/>
    <property type="chains" value="Q1=4-83"/>
</dbReference>
<dbReference type="PDB" id="6XZB">
    <property type="method" value="EM"/>
    <property type="resolution" value="2.54 A"/>
    <property type="chains" value="Q1=4-83"/>
</dbReference>
<dbReference type="PDB" id="6Y69">
    <property type="method" value="EM"/>
    <property type="resolution" value="2.86 A"/>
    <property type="chains" value="q=4-83"/>
</dbReference>
<dbReference type="PDB" id="6ZTJ">
    <property type="method" value="EM"/>
    <property type="resolution" value="3.40 A"/>
    <property type="chains" value="AQ=1-84"/>
</dbReference>
<dbReference type="PDB" id="6ZTL">
    <property type="method" value="EM"/>
    <property type="resolution" value="3.50 A"/>
    <property type="chains" value="AQ=1-84"/>
</dbReference>
<dbReference type="PDB" id="6ZTM">
    <property type="method" value="EM"/>
    <property type="resolution" value="3.30 A"/>
    <property type="chains" value="AQ=1-84"/>
</dbReference>
<dbReference type="PDB" id="6ZTN">
    <property type="method" value="EM"/>
    <property type="resolution" value="3.90 A"/>
    <property type="chains" value="AQ=1-84"/>
</dbReference>
<dbReference type="PDB" id="6ZTO">
    <property type="method" value="EM"/>
    <property type="resolution" value="3.00 A"/>
    <property type="chains" value="AQ=1-84"/>
</dbReference>
<dbReference type="PDB" id="6ZTP">
    <property type="method" value="EM"/>
    <property type="resolution" value="3.00 A"/>
    <property type="chains" value="AQ=1-84"/>
</dbReference>
<dbReference type="PDB" id="6ZU1">
    <property type="method" value="EM"/>
    <property type="resolution" value="3.00 A"/>
    <property type="chains" value="AQ=1-84"/>
</dbReference>
<dbReference type="PDB" id="7ABZ">
    <property type="method" value="EM"/>
    <property type="resolution" value="3.21 A"/>
    <property type="chains" value="v=4-83"/>
</dbReference>
<dbReference type="PDB" id="7AC7">
    <property type="method" value="EM"/>
    <property type="resolution" value="3.08 A"/>
    <property type="chains" value="v=4-83"/>
</dbReference>
<dbReference type="PDB" id="7ACJ">
    <property type="method" value="EM"/>
    <property type="resolution" value="3.20 A"/>
    <property type="chains" value="v=4-83"/>
</dbReference>
<dbReference type="PDB" id="7ACR">
    <property type="method" value="EM"/>
    <property type="resolution" value="3.44 A"/>
    <property type="chains" value="v=4-83"/>
</dbReference>
<dbReference type="PDB" id="7AFI">
    <property type="method" value="EM"/>
    <property type="resolution" value="3.53 A"/>
    <property type="chains" value="Q=1-84"/>
</dbReference>
<dbReference type="PDB" id="7AFL">
    <property type="method" value="EM"/>
    <property type="resolution" value="4.20 A"/>
    <property type="chains" value="Q=1-84"/>
</dbReference>
<dbReference type="PDB" id="7AFO">
    <property type="method" value="EM"/>
    <property type="resolution" value="3.93 A"/>
    <property type="chains" value="Q=1-84"/>
</dbReference>
<dbReference type="PDB" id="7B5K">
    <property type="method" value="EM"/>
    <property type="resolution" value="2.90 A"/>
    <property type="chains" value="q=4-83"/>
</dbReference>
<dbReference type="PDB" id="7BOD">
    <property type="method" value="EM"/>
    <property type="resolution" value="2.88 A"/>
    <property type="chains" value="Q=1-84"/>
</dbReference>
<dbReference type="PDB" id="7BOE">
    <property type="method" value="EM"/>
    <property type="resolution" value="2.90 A"/>
    <property type="chains" value="Q=1-84"/>
</dbReference>
<dbReference type="PDB" id="7BOF">
    <property type="method" value="EM"/>
    <property type="resolution" value="2.92 A"/>
    <property type="chains" value="Q=1-84"/>
</dbReference>
<dbReference type="PDB" id="7BOG">
    <property type="method" value="EM"/>
    <property type="resolution" value="2.75 A"/>
    <property type="chains" value="Q=1-84"/>
</dbReference>
<dbReference type="PDB" id="7BOH">
    <property type="method" value="EM"/>
    <property type="resolution" value="2.82 A"/>
    <property type="chains" value="Q=1-84"/>
</dbReference>
<dbReference type="PDB" id="7BOI">
    <property type="method" value="EM"/>
    <property type="resolution" value="2.98 A"/>
    <property type="chains" value="Q=1-84"/>
</dbReference>
<dbReference type="PDB" id="7D6Z">
    <property type="method" value="EM"/>
    <property type="resolution" value="3.40 A"/>
    <property type="chains" value="x=1-84"/>
</dbReference>
<dbReference type="PDB" id="7D80">
    <property type="method" value="EM"/>
    <property type="resolution" value="4.10 A"/>
    <property type="chains" value="R=1-84"/>
</dbReference>
<dbReference type="PDB" id="7JSS">
    <property type="method" value="EM"/>
    <property type="resolution" value="3.70 A"/>
    <property type="chains" value="V=4-83"/>
</dbReference>
<dbReference type="PDB" id="7JSW">
    <property type="method" value="EM"/>
    <property type="resolution" value="3.80 A"/>
    <property type="chains" value="V=4-83"/>
</dbReference>
<dbReference type="PDB" id="7JSZ">
    <property type="method" value="EM"/>
    <property type="resolution" value="3.70 A"/>
    <property type="chains" value="V=4-83"/>
</dbReference>
<dbReference type="PDB" id="7JT1">
    <property type="method" value="EM"/>
    <property type="resolution" value="3.30 A"/>
    <property type="chains" value="V=4-83"/>
</dbReference>
<dbReference type="PDB" id="7JT2">
    <property type="method" value="EM"/>
    <property type="resolution" value="3.50 A"/>
    <property type="chains" value="V=4-83"/>
</dbReference>
<dbReference type="PDB" id="7JT3">
    <property type="method" value="EM"/>
    <property type="resolution" value="3.70 A"/>
    <property type="chains" value="V=4-83"/>
</dbReference>
<dbReference type="PDB" id="7K00">
    <property type="method" value="EM"/>
    <property type="resolution" value="1.98 A"/>
    <property type="chains" value="Q=1-84"/>
</dbReference>
<dbReference type="PDB" id="7K50">
    <property type="method" value="EM"/>
    <property type="resolution" value="3.40 A"/>
    <property type="chains" value="V=4-83"/>
</dbReference>
<dbReference type="PDB" id="7K51">
    <property type="method" value="EM"/>
    <property type="resolution" value="3.50 A"/>
    <property type="chains" value="V=4-83"/>
</dbReference>
<dbReference type="PDB" id="7K52">
    <property type="method" value="EM"/>
    <property type="resolution" value="3.40 A"/>
    <property type="chains" value="V=4-83"/>
</dbReference>
<dbReference type="PDB" id="7K53">
    <property type="method" value="EM"/>
    <property type="resolution" value="3.20 A"/>
    <property type="chains" value="V=4-83"/>
</dbReference>
<dbReference type="PDB" id="7K54">
    <property type="method" value="EM"/>
    <property type="resolution" value="3.20 A"/>
    <property type="chains" value="V=4-83"/>
</dbReference>
<dbReference type="PDB" id="7K55">
    <property type="method" value="EM"/>
    <property type="resolution" value="3.30 A"/>
    <property type="chains" value="V=4-83"/>
</dbReference>
<dbReference type="PDB" id="7LV0">
    <property type="method" value="EM"/>
    <property type="resolution" value="3.20 A"/>
    <property type="chains" value="V=4-83"/>
</dbReference>
<dbReference type="PDB" id="7M5D">
    <property type="method" value="EM"/>
    <property type="resolution" value="2.80 A"/>
    <property type="chains" value="v=4-83"/>
</dbReference>
<dbReference type="PDB" id="7N1P">
    <property type="method" value="EM"/>
    <property type="resolution" value="2.33 A"/>
    <property type="chains" value="SQ=1-84"/>
</dbReference>
<dbReference type="PDB" id="7N2C">
    <property type="method" value="EM"/>
    <property type="resolution" value="2.72 A"/>
    <property type="chains" value="SQ=1-84"/>
</dbReference>
<dbReference type="PDB" id="7N2U">
    <property type="method" value="EM"/>
    <property type="resolution" value="2.53 A"/>
    <property type="chains" value="SQ=1-84"/>
</dbReference>
<dbReference type="PDB" id="7N2V">
    <property type="method" value="EM"/>
    <property type="resolution" value="2.54 A"/>
    <property type="chains" value="SQ=1-84"/>
</dbReference>
<dbReference type="PDB" id="7N30">
    <property type="method" value="EM"/>
    <property type="resolution" value="2.66 A"/>
    <property type="chains" value="SQ=1-84"/>
</dbReference>
<dbReference type="PDB" id="7N31">
    <property type="method" value="EM"/>
    <property type="resolution" value="2.69 A"/>
    <property type="chains" value="SQ=1-84"/>
</dbReference>
<dbReference type="PDB" id="7NAR">
    <property type="method" value="EM"/>
    <property type="resolution" value="3.00 A"/>
    <property type="chains" value="Q=1-84"/>
</dbReference>
<dbReference type="PDB" id="7NAS">
    <property type="method" value="EM"/>
    <property type="resolution" value="3.31 A"/>
    <property type="chains" value="Q=1-84"/>
</dbReference>
<dbReference type="PDB" id="7NAT">
    <property type="method" value="EM"/>
    <property type="resolution" value="3.59 A"/>
    <property type="chains" value="Q=1-84"/>
</dbReference>
<dbReference type="PDB" id="7NAU">
    <property type="method" value="EM"/>
    <property type="resolution" value="3.78 A"/>
    <property type="chains" value="Q=1-84"/>
</dbReference>
<dbReference type="PDB" id="7NAV">
    <property type="method" value="EM"/>
    <property type="resolution" value="4.80 A"/>
    <property type="chains" value="Q=1-84"/>
</dbReference>
<dbReference type="PDB" id="7NAX">
    <property type="method" value="EM"/>
    <property type="resolution" value="2.96 A"/>
    <property type="chains" value="Q=1-84"/>
</dbReference>
<dbReference type="PDB" id="7NBU">
    <property type="method" value="EM"/>
    <property type="resolution" value="3.11 A"/>
    <property type="chains" value="Q=4-82"/>
</dbReference>
<dbReference type="PDB" id="7O19">
    <property type="method" value="EM"/>
    <property type="resolution" value="2.90 A"/>
    <property type="chains" value="AQ=1-84"/>
</dbReference>
<dbReference type="PDB" id="7O1A">
    <property type="method" value="EM"/>
    <property type="resolution" value="2.40 A"/>
    <property type="chains" value="AQ=1-84"/>
</dbReference>
<dbReference type="PDB" id="7O1C">
    <property type="method" value="EM"/>
    <property type="resolution" value="2.60 A"/>
    <property type="chains" value="AQ=1-84"/>
</dbReference>
<dbReference type="PDB" id="7O5H">
    <property type="method" value="EM"/>
    <property type="resolution" value="3.10 A"/>
    <property type="chains" value="Q=4-83"/>
</dbReference>
<dbReference type="PDB" id="7OE0">
    <property type="method" value="EM"/>
    <property type="resolution" value="2.69 A"/>
    <property type="chains" value="Q=2-84"/>
</dbReference>
<dbReference type="PDB" id="7OE1">
    <property type="method" value="EM"/>
    <property type="resolution" value="3.05 A"/>
    <property type="chains" value="Q=2-84"/>
</dbReference>
<dbReference type="PDB" id="7OI0">
    <property type="method" value="EM"/>
    <property type="resolution" value="2.76 A"/>
    <property type="chains" value="Q=2-84"/>
</dbReference>
<dbReference type="PDB" id="7OIZ">
    <property type="method" value="EM"/>
    <property type="resolution" value="2.90 A"/>
    <property type="chains" value="Q=1-84"/>
</dbReference>
<dbReference type="PDB" id="7OJ0">
    <property type="method" value="EM"/>
    <property type="resolution" value="3.50 A"/>
    <property type="chains" value="Q=1-84"/>
</dbReference>
<dbReference type="PDB" id="7P3K">
    <property type="method" value="EM"/>
    <property type="resolution" value="2.90 A"/>
    <property type="chains" value="Q=1-84"/>
</dbReference>
<dbReference type="PDB" id="7PJU">
    <property type="method" value="EM"/>
    <property type="resolution" value="9.50 A"/>
    <property type="chains" value="q=1-84"/>
</dbReference>
<dbReference type="PDB" id="7PJV">
    <property type="method" value="EM"/>
    <property type="resolution" value="3.10 A"/>
    <property type="chains" value="q=1-84"/>
</dbReference>
<dbReference type="PDB" id="7PJY">
    <property type="method" value="EM"/>
    <property type="resolution" value="3.10 A"/>
    <property type="chains" value="q=1-84"/>
</dbReference>
<dbReference type="PDB" id="7QG8">
    <property type="method" value="EM"/>
    <property type="resolution" value="3.97 A"/>
    <property type="chains" value="J=1-84"/>
</dbReference>
<dbReference type="PDB" id="7QGH">
    <property type="method" value="EM"/>
    <property type="resolution" value="4.48 A"/>
    <property type="chains" value="H=1-84"/>
</dbReference>
<dbReference type="PDB" id="7QGN">
    <property type="method" value="EM"/>
    <property type="resolution" value="3.37 A"/>
    <property type="chains" value="J=1-84"/>
</dbReference>
<dbReference type="PDB" id="7QGR">
    <property type="method" value="EM"/>
    <property type="resolution" value="5.70 A"/>
    <property type="chains" value="H=1-84"/>
</dbReference>
<dbReference type="PDB" id="7S1G">
    <property type="method" value="EM"/>
    <property type="resolution" value="2.48 A"/>
    <property type="chains" value="y=1-84"/>
</dbReference>
<dbReference type="PDB" id="7S1H">
    <property type="method" value="EM"/>
    <property type="resolution" value="2.35 A"/>
    <property type="chains" value="y=1-84"/>
</dbReference>
<dbReference type="PDB" id="7S1I">
    <property type="method" value="EM"/>
    <property type="resolution" value="2.48 A"/>
    <property type="chains" value="y=1-84"/>
</dbReference>
<dbReference type="PDB" id="7S1J">
    <property type="method" value="EM"/>
    <property type="resolution" value="2.47 A"/>
    <property type="chains" value="y=1-84"/>
</dbReference>
<dbReference type="PDB" id="7S1K">
    <property type="method" value="EM"/>
    <property type="resolution" value="2.42 A"/>
    <property type="chains" value="y=1-84"/>
</dbReference>
<dbReference type="PDB" id="7SA4">
    <property type="method" value="EM"/>
    <property type="resolution" value="2.55 A"/>
    <property type="chains" value="v=1-84"/>
</dbReference>
<dbReference type="PDB" id="7SS9">
    <property type="method" value="EM"/>
    <property type="resolution" value="3.90 A"/>
    <property type="chains" value="V=4-83"/>
</dbReference>
<dbReference type="PDB" id="7SSD">
    <property type="method" value="EM"/>
    <property type="resolution" value="3.30 A"/>
    <property type="chains" value="V=4-83"/>
</dbReference>
<dbReference type="PDB" id="7SSL">
    <property type="method" value="EM"/>
    <property type="resolution" value="3.80 A"/>
    <property type="chains" value="V=4-83"/>
</dbReference>
<dbReference type="PDB" id="7SSN">
    <property type="method" value="EM"/>
    <property type="resolution" value="3.20 A"/>
    <property type="chains" value="V=4-83"/>
</dbReference>
<dbReference type="PDB" id="7SSO">
    <property type="method" value="EM"/>
    <property type="resolution" value="3.20 A"/>
    <property type="chains" value="V=4-83"/>
</dbReference>
<dbReference type="PDB" id="7SSW">
    <property type="method" value="EM"/>
    <property type="resolution" value="3.80 A"/>
    <property type="chains" value="V=4-83"/>
</dbReference>
<dbReference type="PDB" id="7ST2">
    <property type="method" value="EM"/>
    <property type="resolution" value="2.90 A"/>
    <property type="chains" value="V=4-83"/>
</dbReference>
<dbReference type="PDB" id="7ST6">
    <property type="method" value="EM"/>
    <property type="resolution" value="3.00 A"/>
    <property type="chains" value="V=4-83"/>
</dbReference>
<dbReference type="PDB" id="7ST7">
    <property type="method" value="EM"/>
    <property type="resolution" value="3.20 A"/>
    <property type="chains" value="V=4-83"/>
</dbReference>
<dbReference type="PDB" id="7TOS">
    <property type="method" value="EM"/>
    <property type="resolution" value="2.90 A"/>
    <property type="chains" value="S17=4-83"/>
</dbReference>
<dbReference type="PDB" id="7UG7">
    <property type="method" value="EM"/>
    <property type="resolution" value="2.58 A"/>
    <property type="chains" value="SQ=1-84"/>
</dbReference>
<dbReference type="PDB" id="7UPH">
    <property type="method" value="EM"/>
    <property type="resolution" value="4.18 A"/>
    <property type="chains" value="D=4-83"/>
</dbReference>
<dbReference type="PDB" id="7Y7C">
    <property type="method" value="EM"/>
    <property type="resolution" value="2.51 A"/>
    <property type="chains" value="Q=1-84"/>
</dbReference>
<dbReference type="PDB" id="7Y7D">
    <property type="method" value="EM"/>
    <property type="resolution" value="2.58 A"/>
    <property type="chains" value="Q=1-84"/>
</dbReference>
<dbReference type="PDB" id="7Y7E">
    <property type="method" value="EM"/>
    <property type="resolution" value="2.41 A"/>
    <property type="chains" value="Q=1-84"/>
</dbReference>
<dbReference type="PDB" id="7Y7F">
    <property type="method" value="EM"/>
    <property type="resolution" value="2.43 A"/>
    <property type="chains" value="Q=1-84"/>
</dbReference>
<dbReference type="PDB" id="7Y7G">
    <property type="method" value="EM"/>
    <property type="resolution" value="2.34 A"/>
    <property type="chains" value="Q=1-84"/>
</dbReference>
<dbReference type="PDB" id="7Y7H">
    <property type="method" value="EM"/>
    <property type="resolution" value="2.51 A"/>
    <property type="chains" value="Q=1-84"/>
</dbReference>
<dbReference type="PDB" id="7ZTA">
    <property type="method" value="EM"/>
    <property type="resolution" value="2.70 A"/>
    <property type="chains" value="S171=4-83"/>
</dbReference>
<dbReference type="PDB" id="8A3L">
    <property type="method" value="EM"/>
    <property type="resolution" value="3.42 A"/>
    <property type="chains" value="Q=1-84"/>
</dbReference>
<dbReference type="PDB" id="8AKN">
    <property type="method" value="EM"/>
    <property type="resolution" value="2.30 A"/>
    <property type="chains" value="R=1-84"/>
</dbReference>
<dbReference type="PDB" id="8AM9">
    <property type="method" value="EM"/>
    <property type="resolution" value="2.80 A"/>
    <property type="chains" value="R=1-84"/>
</dbReference>
<dbReference type="PDB" id="8AYE">
    <property type="method" value="EM"/>
    <property type="resolution" value="1.96 A"/>
    <property type="chains" value="Q=1-84"/>
</dbReference>
<dbReference type="PDB" id="8B0X">
    <property type="method" value="EM"/>
    <property type="resolution" value="1.55 A"/>
    <property type="chains" value="Q=1-84"/>
</dbReference>
<dbReference type="PDB" id="8B7Y">
    <property type="method" value="EM"/>
    <property type="resolution" value="3.00 A"/>
    <property type="chains" value="v=1-84"/>
</dbReference>
<dbReference type="PDB" id="8BF7">
    <property type="method" value="EM"/>
    <property type="resolution" value="2.33 A"/>
    <property type="chains" value="u=1-84"/>
</dbReference>
<dbReference type="PDB" id="8BGE">
    <property type="method" value="EM"/>
    <property type="resolution" value="2.11 A"/>
    <property type="chains" value="u=1-84"/>
</dbReference>
<dbReference type="PDB" id="8BGH">
    <property type="method" value="EM"/>
    <property type="resolution" value="2.88 A"/>
    <property type="chains" value="u=1-84"/>
</dbReference>
<dbReference type="PDB" id="8BH4">
    <property type="method" value="EM"/>
    <property type="resolution" value="2.62 A"/>
    <property type="chains" value="u=1-84"/>
</dbReference>
<dbReference type="PDB" id="8BHJ">
    <property type="method" value="EM"/>
    <property type="resolution" value="2.81 A"/>
    <property type="chains" value="u=1-84"/>
</dbReference>
<dbReference type="PDB" id="8BHL">
    <property type="method" value="EM"/>
    <property type="resolution" value="2.21 A"/>
    <property type="chains" value="u=1-84"/>
</dbReference>
<dbReference type="PDB" id="8BHN">
    <property type="method" value="EM"/>
    <property type="resolution" value="2.85 A"/>
    <property type="chains" value="u=1-84"/>
</dbReference>
<dbReference type="PDB" id="8BHP">
    <property type="method" value="EM"/>
    <property type="resolution" value="2.37 A"/>
    <property type="chains" value="u=1-84"/>
</dbReference>
<dbReference type="PDB" id="8BIL">
    <property type="method" value="EM"/>
    <property type="resolution" value="2.04 A"/>
    <property type="chains" value="u=1-84"/>
</dbReference>
<dbReference type="PDB" id="8BIM">
    <property type="method" value="EM"/>
    <property type="resolution" value="2.04 A"/>
    <property type="chains" value="u=1-84"/>
</dbReference>
<dbReference type="PDB" id="8CAI">
    <property type="method" value="EM"/>
    <property type="resolution" value="2.08 A"/>
    <property type="chains" value="Q=1-84"/>
</dbReference>
<dbReference type="PDB" id="8CEP">
    <property type="method" value="EM"/>
    <property type="resolution" value="2.04 A"/>
    <property type="chains" value="Q=1-84"/>
</dbReference>
<dbReference type="PDB" id="8CGJ">
    <property type="method" value="EM"/>
    <property type="resolution" value="1.79 A"/>
    <property type="chains" value="Q=1-84"/>
</dbReference>
<dbReference type="PDB" id="8CGR">
    <property type="method" value="EM"/>
    <property type="resolution" value="2.12 A"/>
    <property type="chains" value="Q=1-84"/>
</dbReference>
<dbReference type="PDB" id="8CGU">
    <property type="method" value="EM"/>
    <property type="resolution" value="1.89 A"/>
    <property type="chains" value="Q=1-84"/>
</dbReference>
<dbReference type="PDB" id="8EIU">
    <property type="method" value="EM"/>
    <property type="resolution" value="2.24 A"/>
    <property type="chains" value="Q=1-84"/>
</dbReference>
<dbReference type="PDB" id="8EKC">
    <property type="method" value="EM"/>
    <property type="resolution" value="2.70 A"/>
    <property type="chains" value="q=1-84"/>
</dbReference>
<dbReference type="PDB" id="8EMM">
    <property type="method" value="EM"/>
    <property type="resolution" value="2.10 A"/>
    <property type="chains" value="Q=1-84"/>
</dbReference>
<dbReference type="PDB" id="8EYQ">
    <property type="method" value="EM"/>
    <property type="resolution" value="3.30 A"/>
    <property type="chains" value="Q=1-84"/>
</dbReference>
<dbReference type="PDB" id="8EYT">
    <property type="method" value="EM"/>
    <property type="resolution" value="2.80 A"/>
    <property type="chains" value="Q=1-84"/>
</dbReference>
<dbReference type="PDB" id="8FIZ">
    <property type="method" value="EM"/>
    <property type="resolution" value="3.80 A"/>
    <property type="chains" value="AS=1-84"/>
</dbReference>
<dbReference type="PDB" id="8FTO">
    <property type="method" value="EM"/>
    <property type="resolution" value="1.85 A"/>
    <property type="chains" value="Q=1-84"/>
</dbReference>
<dbReference type="PDB" id="8FZD">
    <property type="method" value="EM"/>
    <property type="resolution" value="3.10 A"/>
    <property type="chains" value="q=1-84"/>
</dbReference>
<dbReference type="PDB" id="8FZE">
    <property type="method" value="EM"/>
    <property type="resolution" value="3.00 A"/>
    <property type="chains" value="q=1-84"/>
</dbReference>
<dbReference type="PDB" id="8FZF">
    <property type="method" value="EM"/>
    <property type="resolution" value="3.20 A"/>
    <property type="chains" value="q=1-84"/>
</dbReference>
<dbReference type="PDB" id="8FZG">
    <property type="method" value="EM"/>
    <property type="resolution" value="3.10 A"/>
    <property type="chains" value="q=1-84"/>
</dbReference>
<dbReference type="PDB" id="8FZH">
    <property type="method" value="EM"/>
    <property type="resolution" value="2.90 A"/>
    <property type="chains" value="q=1-84"/>
</dbReference>
<dbReference type="PDB" id="8FZI">
    <property type="method" value="EM"/>
    <property type="resolution" value="3.10 A"/>
    <property type="chains" value="q=1-84"/>
</dbReference>
<dbReference type="PDB" id="8FZJ">
    <property type="method" value="EM"/>
    <property type="resolution" value="3.00 A"/>
    <property type="chains" value="q=1-84"/>
</dbReference>
<dbReference type="PDB" id="8G2U">
    <property type="method" value="EM"/>
    <property type="resolution" value="3.00 A"/>
    <property type="chains" value="p=4-83"/>
</dbReference>
<dbReference type="PDB" id="8G31">
    <property type="method" value="EM"/>
    <property type="resolution" value="3.20 A"/>
    <property type="chains" value="p=4-83"/>
</dbReference>
<dbReference type="PDB" id="8G34">
    <property type="method" value="EM"/>
    <property type="resolution" value="3.20 A"/>
    <property type="chains" value="p=4-83"/>
</dbReference>
<dbReference type="PDB" id="8G38">
    <property type="method" value="EM"/>
    <property type="resolution" value="3.20 A"/>
    <property type="chains" value="p=4-83"/>
</dbReference>
<dbReference type="PDB" id="8G6W">
    <property type="method" value="EM"/>
    <property type="resolution" value="2.02 A"/>
    <property type="chains" value="Q=1-84"/>
</dbReference>
<dbReference type="PDB" id="8G7P">
    <property type="method" value="EM"/>
    <property type="resolution" value="2.90 A"/>
    <property type="chains" value="q=1-84"/>
</dbReference>
<dbReference type="PDB" id="8G7Q">
    <property type="method" value="EM"/>
    <property type="resolution" value="3.10 A"/>
    <property type="chains" value="q=1-84"/>
</dbReference>
<dbReference type="PDB" id="8G7R">
    <property type="method" value="EM"/>
    <property type="resolution" value="2.80 A"/>
    <property type="chains" value="q=1-84"/>
</dbReference>
<dbReference type="PDB" id="8G7S">
    <property type="method" value="EM"/>
    <property type="resolution" value="3.10 A"/>
    <property type="chains" value="q=1-84"/>
</dbReference>
<dbReference type="PDB" id="8GHU">
    <property type="method" value="EM"/>
    <property type="resolution" value="3.00 A"/>
    <property type="chains" value="q=4-83"/>
</dbReference>
<dbReference type="PDB" id="8HSP">
    <property type="method" value="EM"/>
    <property type="resolution" value="2.32 A"/>
    <property type="chains" value="Q=1-84"/>
</dbReference>
<dbReference type="PDB" id="8HTZ">
    <property type="method" value="EM"/>
    <property type="resolution" value="2.40 A"/>
    <property type="chains" value="Q=1-84"/>
</dbReference>
<dbReference type="PDB" id="8HU1">
    <property type="method" value="EM"/>
    <property type="resolution" value="2.69 A"/>
    <property type="chains" value="Q=1-84"/>
</dbReference>
<dbReference type="PDB" id="8IFB">
    <property type="method" value="EM"/>
    <property type="resolution" value="2.43 A"/>
    <property type="chains" value="Q=1-84"/>
</dbReference>
<dbReference type="PDB" id="8IFC">
    <property type="method" value="EM"/>
    <property type="resolution" value="2.90 A"/>
    <property type="chains" value="Q=1-84"/>
</dbReference>
<dbReference type="PDB" id="8JSG">
    <property type="method" value="EM"/>
    <property type="resolution" value="4.60 A"/>
    <property type="chains" value="P=2-83"/>
</dbReference>
<dbReference type="PDB" id="8JSH">
    <property type="method" value="EM"/>
    <property type="resolution" value="4.40 A"/>
    <property type="chains" value="P=1-84"/>
</dbReference>
<dbReference type="PDB" id="8K3O">
    <property type="method" value="EM"/>
    <property type="resolution" value="3.88 A"/>
    <property type="chains" value="Q=1-84"/>
</dbReference>
<dbReference type="PDB" id="8K4E">
    <property type="method" value="EM"/>
    <property type="resolution" value="3.40 A"/>
    <property type="chains" value="Q=1-84"/>
</dbReference>
<dbReference type="PDB" id="8P16">
    <property type="method" value="EM"/>
    <property type="resolution" value="2.77 A"/>
    <property type="chains" value="v=1-84"/>
</dbReference>
<dbReference type="PDB" id="8P17">
    <property type="method" value="EM"/>
    <property type="resolution" value="2.78 A"/>
    <property type="chains" value="v=1-84"/>
</dbReference>
<dbReference type="PDB" id="8P18">
    <property type="method" value="EM"/>
    <property type="resolution" value="2.77 A"/>
    <property type="chains" value="v=1-84"/>
</dbReference>
<dbReference type="PDB" id="8PEG">
    <property type="method" value="EM"/>
    <property type="resolution" value="3.30 A"/>
    <property type="chains" value="Q=1-84"/>
</dbReference>
<dbReference type="PDB" id="8PHJ">
    <property type="method" value="EM"/>
    <property type="resolution" value="3.67 A"/>
    <property type="chains" value="Q=1-84"/>
</dbReference>
<dbReference type="PDB" id="8PKL">
    <property type="method" value="EM"/>
    <property type="resolution" value="3.09 A"/>
    <property type="chains" value="Q=1-84"/>
</dbReference>
<dbReference type="PDB" id="8PVA">
    <property type="method" value="EM"/>
    <property type="resolution" value="4.50 A"/>
    <property type="chains" value="Q=1-84"/>
</dbReference>
<dbReference type="PDB" id="8Q4F">
    <property type="method" value="EM"/>
    <property type="resolution" value="3.10 A"/>
    <property type="chains" value="Q=1-84"/>
</dbReference>
<dbReference type="PDB" id="8QBT">
    <property type="method" value="EM"/>
    <property type="resolution" value="2.20 A"/>
    <property type="chains" value="y=1-84"/>
</dbReference>
<dbReference type="PDB" id="8QK7">
    <property type="method" value="EM"/>
    <property type="resolution" value="2.77 A"/>
    <property type="chains" value="v=1-84"/>
</dbReference>
<dbReference type="PDB" id="8QOA">
    <property type="method" value="EM"/>
    <property type="resolution" value="2.00 A"/>
    <property type="chains" value="Q=1-84"/>
</dbReference>
<dbReference type="PDB" id="8R3V">
    <property type="method" value="EM"/>
    <property type="resolution" value="3.28 A"/>
    <property type="chains" value="Q1/Q2=1-84"/>
</dbReference>
<dbReference type="PDB" id="8R6C">
    <property type="method" value="EM"/>
    <property type="resolution" value="2.20 A"/>
    <property type="chains" value="Q=1-84"/>
</dbReference>
<dbReference type="PDB" id="8R8M">
    <property type="method" value="EM"/>
    <property type="resolution" value="2.40 A"/>
    <property type="chains" value="Q=1-84"/>
</dbReference>
<dbReference type="PDB" id="8RCL">
    <property type="method" value="EM"/>
    <property type="resolution" value="3.49 A"/>
    <property type="chains" value="Q1/Q2=1-84"/>
</dbReference>
<dbReference type="PDB" id="8RCM">
    <property type="method" value="EM"/>
    <property type="resolution" value="3.59 A"/>
    <property type="chains" value="Q1/Q2=1-84"/>
</dbReference>
<dbReference type="PDB" id="8RCS">
    <property type="method" value="EM"/>
    <property type="resolution" value="4.46 A"/>
    <property type="chains" value="Q1/Q2=1-84"/>
</dbReference>
<dbReference type="PDB" id="8RCT">
    <property type="method" value="EM"/>
    <property type="resolution" value="5.32 A"/>
    <property type="chains" value="Q1/Q2=1-84"/>
</dbReference>
<dbReference type="PDB" id="8SYL">
    <property type="method" value="EM"/>
    <property type="resolution" value="2.90 A"/>
    <property type="chains" value="q=1-84"/>
</dbReference>
<dbReference type="PDB" id="8T5D">
    <property type="method" value="EM"/>
    <property type="resolution" value="3.20 A"/>
    <property type="chains" value="p=4-83"/>
</dbReference>
<dbReference type="PDB" id="8T5H">
    <property type="method" value="EM"/>
    <property type="resolution" value="3.30 A"/>
    <property type="chains" value="p=4-83"/>
</dbReference>
<dbReference type="PDB" id="8UPO">
    <property type="method" value="EM"/>
    <property type="resolution" value="5.50 A"/>
    <property type="chains" value="V=1-84"/>
</dbReference>
<dbReference type="PDB" id="8UPR">
    <property type="method" value="EM"/>
    <property type="resolution" value="5.30 A"/>
    <property type="chains" value="V=1-84"/>
</dbReference>
<dbReference type="PDB" id="8UQL">
    <property type="method" value="EM"/>
    <property type="resolution" value="3.20 A"/>
    <property type="chains" value="V=1-84"/>
</dbReference>
<dbReference type="PDB" id="8UQM">
    <property type="method" value="EM"/>
    <property type="resolution" value="5.30 A"/>
    <property type="chains" value="V=1-84"/>
</dbReference>
<dbReference type="PDB" id="8UQP">
    <property type="method" value="EM"/>
    <property type="resolution" value="3.80 A"/>
    <property type="chains" value="V=1-84"/>
</dbReference>
<dbReference type="PDB" id="8UR0">
    <property type="method" value="EM"/>
    <property type="resolution" value="3.40 A"/>
    <property type="chains" value="V=1-84"/>
</dbReference>
<dbReference type="PDB" id="8URH">
    <property type="method" value="EM"/>
    <property type="resolution" value="5.70 A"/>
    <property type="chains" value="V=1-84"/>
</dbReference>
<dbReference type="PDB" id="8URI">
    <property type="method" value="EM"/>
    <property type="resolution" value="5.30 A"/>
    <property type="chains" value="V=1-84"/>
</dbReference>
<dbReference type="PDB" id="8URX">
    <property type="method" value="EM"/>
    <property type="resolution" value="6.60 A"/>
    <property type="chains" value="V=1-84"/>
</dbReference>
<dbReference type="PDB" id="8URY">
    <property type="method" value="EM"/>
    <property type="resolution" value="3.10 A"/>
    <property type="chains" value="V=1-84"/>
</dbReference>
<dbReference type="PDB" id="8VS9">
    <property type="method" value="EM"/>
    <property type="resolution" value="3.90 A"/>
    <property type="chains" value="S17=1-84"/>
</dbReference>
<dbReference type="PDB" id="8VSA">
    <property type="method" value="EM"/>
    <property type="resolution" value="3.70 A"/>
    <property type="chains" value="S17=1-84"/>
</dbReference>
<dbReference type="PDB" id="8YUO">
    <property type="method" value="EM"/>
    <property type="resolution" value="2.25 A"/>
    <property type="chains" value="Q=1-84"/>
</dbReference>
<dbReference type="PDB" id="8YUP">
    <property type="method" value="EM"/>
    <property type="resolution" value="2.39 A"/>
    <property type="chains" value="Q=1-84"/>
</dbReference>
<dbReference type="PDB" id="8YUQ">
    <property type="method" value="EM"/>
    <property type="resolution" value="2.41 A"/>
    <property type="chains" value="Q=1-84"/>
</dbReference>
<dbReference type="PDB" id="8YUR">
    <property type="method" value="EM"/>
    <property type="resolution" value="2.47 A"/>
    <property type="chains" value="Q=1-84"/>
</dbReference>
<dbReference type="PDB" id="8YUS">
    <property type="method" value="EM"/>
    <property type="resolution" value="2.43 A"/>
    <property type="chains" value="Q=1-84"/>
</dbReference>
<dbReference type="PDB" id="9DUK">
    <property type="method" value="EM"/>
    <property type="resolution" value="2.56 A"/>
    <property type="chains" value="Q=1-84"/>
</dbReference>
<dbReference type="PDB" id="9DUL">
    <property type="method" value="EM"/>
    <property type="resolution" value="2.56 A"/>
    <property type="chains" value="Q=1-84"/>
</dbReference>
<dbReference type="PDB" id="9FBV">
    <property type="method" value="EM"/>
    <property type="resolution" value="2.40 A"/>
    <property type="chains" value="Q=1-84"/>
</dbReference>
<dbReference type="PDB" id="9GFT">
    <property type="method" value="EM"/>
    <property type="resolution" value="3.10 A"/>
    <property type="chains" value="AP/J=1-84"/>
</dbReference>
<dbReference type="PDB" id="9GGR">
    <property type="method" value="EM"/>
    <property type="resolution" value="3.20 A"/>
    <property type="chains" value="AP/J=1-84"/>
</dbReference>
<dbReference type="PDB" id="9GUP">
    <property type="method" value="EM"/>
    <property type="resolution" value="2.80 A"/>
    <property type="chains" value="R=1-84"/>
</dbReference>
<dbReference type="PDB" id="9GUQ">
    <property type="method" value="EM"/>
    <property type="resolution" value="3.10 A"/>
    <property type="chains" value="R=1-84"/>
</dbReference>
<dbReference type="PDB" id="9GUS">
    <property type="method" value="EM"/>
    <property type="resolution" value="3.50 A"/>
    <property type="chains" value="R=1-84"/>
</dbReference>
<dbReference type="PDB" id="9GUT">
    <property type="method" value="EM"/>
    <property type="resolution" value="2.80 A"/>
    <property type="chains" value="R=1-84"/>
</dbReference>
<dbReference type="PDB" id="9GUU">
    <property type="method" value="EM"/>
    <property type="resolution" value="2.50 A"/>
    <property type="chains" value="R=1-84"/>
</dbReference>
<dbReference type="PDB" id="9GUV">
    <property type="method" value="EM"/>
    <property type="resolution" value="3.00 A"/>
    <property type="chains" value="R=1-84"/>
</dbReference>
<dbReference type="PDB" id="9GUW">
    <property type="method" value="EM"/>
    <property type="resolution" value="3.10 A"/>
    <property type="chains" value="R=1-84"/>
</dbReference>
<dbReference type="PDB" id="9GUX">
    <property type="method" value="EM"/>
    <property type="resolution" value="3.30 A"/>
    <property type="chains" value="R=1-84"/>
</dbReference>
<dbReference type="PDB" id="9MOR">
    <property type="method" value="EM"/>
    <property type="resolution" value="2.65 A"/>
    <property type="chains" value="v=1-84"/>
</dbReference>
<dbReference type="PDB" id="9MQ4">
    <property type="method" value="EM"/>
    <property type="resolution" value="2.78 A"/>
    <property type="chains" value="v=1-84"/>
</dbReference>
<dbReference type="PDBsum" id="1EG0"/>
<dbReference type="PDBsum" id="2YKR"/>
<dbReference type="PDBsum" id="3IY8"/>
<dbReference type="PDBsum" id="3J9Y"/>
<dbReference type="PDBsum" id="3J9Z"/>
<dbReference type="PDBsum" id="3JA1"/>
<dbReference type="PDBsum" id="3JBU"/>
<dbReference type="PDBsum" id="3JBV"/>
<dbReference type="PDBsum" id="3JCD"/>
<dbReference type="PDBsum" id="3JCE"/>
<dbReference type="PDBsum" id="3JCJ"/>
<dbReference type="PDBsum" id="3JCN"/>
<dbReference type="PDBsum" id="4A2I"/>
<dbReference type="PDBsum" id="4ADV"/>
<dbReference type="PDBsum" id="4U1U"/>
<dbReference type="PDBsum" id="4U1V"/>
<dbReference type="PDBsum" id="4U20"/>
<dbReference type="PDBsum" id="4U24"/>
<dbReference type="PDBsum" id="4U25"/>
<dbReference type="PDBsum" id="4U26"/>
<dbReference type="PDBsum" id="4U27"/>
<dbReference type="PDBsum" id="4V47"/>
<dbReference type="PDBsum" id="4V48"/>
<dbReference type="PDBsum" id="4V4H"/>
<dbReference type="PDBsum" id="4V4Q"/>
<dbReference type="PDBsum" id="4V4V"/>
<dbReference type="PDBsum" id="4V4W"/>
<dbReference type="PDBsum" id="4V50"/>
<dbReference type="PDBsum" id="4V52"/>
<dbReference type="PDBsum" id="4V53"/>
<dbReference type="PDBsum" id="4V54"/>
<dbReference type="PDBsum" id="4V55"/>
<dbReference type="PDBsum" id="4V56"/>
<dbReference type="PDBsum" id="4V57"/>
<dbReference type="PDBsum" id="4V5B"/>
<dbReference type="PDBsum" id="4V5H"/>
<dbReference type="PDBsum" id="4V5Y"/>
<dbReference type="PDBsum" id="4V64"/>
<dbReference type="PDBsum" id="4V65"/>
<dbReference type="PDBsum" id="4V66"/>
<dbReference type="PDBsum" id="4V69"/>
<dbReference type="PDBsum" id="4V6C"/>
<dbReference type="PDBsum" id="4V6D"/>
<dbReference type="PDBsum" id="4V6E"/>
<dbReference type="PDBsum" id="4V6K"/>
<dbReference type="PDBsum" id="4V6L"/>
<dbReference type="PDBsum" id="4V6M"/>
<dbReference type="PDBsum" id="4V6N"/>
<dbReference type="PDBsum" id="4V6O"/>
<dbReference type="PDBsum" id="4V6P"/>
<dbReference type="PDBsum" id="4V6Q"/>
<dbReference type="PDBsum" id="4V6R"/>
<dbReference type="PDBsum" id="4V6S"/>
<dbReference type="PDBsum" id="4V6T"/>
<dbReference type="PDBsum" id="4V6V"/>
<dbReference type="PDBsum" id="4V6Y"/>
<dbReference type="PDBsum" id="4V6Z"/>
<dbReference type="PDBsum" id="4V70"/>
<dbReference type="PDBsum" id="4V71"/>
<dbReference type="PDBsum" id="4V72"/>
<dbReference type="PDBsum" id="4V73"/>
<dbReference type="PDBsum" id="4V74"/>
<dbReference type="PDBsum" id="4V75"/>
<dbReference type="PDBsum" id="4V76"/>
<dbReference type="PDBsum" id="4V77"/>
<dbReference type="PDBsum" id="4V78"/>
<dbReference type="PDBsum" id="4V79"/>
<dbReference type="PDBsum" id="4V7A"/>
<dbReference type="PDBsum" id="4V7B"/>
<dbReference type="PDBsum" id="4V7C"/>
<dbReference type="PDBsum" id="4V7D"/>
<dbReference type="PDBsum" id="4V7I"/>
<dbReference type="PDBsum" id="4V7S"/>
<dbReference type="PDBsum" id="4V7T"/>
<dbReference type="PDBsum" id="4V7U"/>
<dbReference type="PDBsum" id="4V7V"/>
<dbReference type="PDBsum" id="4V85"/>
<dbReference type="PDBsum" id="4V89"/>
<dbReference type="PDBsum" id="4V9C"/>
<dbReference type="PDBsum" id="4V9D"/>
<dbReference type="PDBsum" id="4V9O"/>
<dbReference type="PDBsum" id="4V9P"/>
<dbReference type="PDBsum" id="4WF1"/>
<dbReference type="PDBsum" id="4WOI"/>
<dbReference type="PDBsum" id="4WWW"/>
<dbReference type="PDBsum" id="4YBB"/>
<dbReference type="PDBsum" id="5AFI"/>
<dbReference type="PDBsum" id="5H5U"/>
<dbReference type="PDBsum" id="5IQR"/>
<dbReference type="PDBsum" id="5IT8"/>
<dbReference type="PDBsum" id="5J5B"/>
<dbReference type="PDBsum" id="5J7L"/>
<dbReference type="PDBsum" id="5J88"/>
<dbReference type="PDBsum" id="5J8A"/>
<dbReference type="PDBsum" id="5J91"/>
<dbReference type="PDBsum" id="5JC9"/>
<dbReference type="PDBsum" id="5JTE"/>
<dbReference type="PDBsum" id="5JU8"/>
<dbReference type="PDBsum" id="5KCR"/>
<dbReference type="PDBsum" id="5KCS"/>
<dbReference type="PDBsum" id="5KPS"/>
<dbReference type="PDBsum" id="5KPV"/>
<dbReference type="PDBsum" id="5KPW"/>
<dbReference type="PDBsum" id="5KPX"/>
<dbReference type="PDBsum" id="5L3P"/>
<dbReference type="PDBsum" id="5LZA"/>
<dbReference type="PDBsum" id="5LZB"/>
<dbReference type="PDBsum" id="5LZC"/>
<dbReference type="PDBsum" id="5LZD"/>
<dbReference type="PDBsum" id="5LZE"/>
<dbReference type="PDBsum" id="5LZF"/>
<dbReference type="PDBsum" id="5MDV"/>
<dbReference type="PDBsum" id="5MDW"/>
<dbReference type="PDBsum" id="5MDY"/>
<dbReference type="PDBsum" id="5MDZ"/>
<dbReference type="PDBsum" id="5ME0"/>
<dbReference type="PDBsum" id="5ME1"/>
<dbReference type="PDBsum" id="5MGP"/>
<dbReference type="PDBsum" id="5MY1"/>
<dbReference type="PDBsum" id="5NO2"/>
<dbReference type="PDBsum" id="5NO3"/>
<dbReference type="PDBsum" id="5NO4"/>
<dbReference type="PDBsum" id="5NP6"/>
<dbReference type="PDBsum" id="5NWY"/>
<dbReference type="PDBsum" id="5O2R"/>
<dbReference type="PDBsum" id="5U4I"/>
<dbReference type="PDBsum" id="5U9F"/>
<dbReference type="PDBsum" id="5U9G"/>
<dbReference type="PDBsum" id="5UYK"/>
<dbReference type="PDBsum" id="5UYL"/>
<dbReference type="PDBsum" id="5UYM"/>
<dbReference type="PDBsum" id="5UYN"/>
<dbReference type="PDBsum" id="5UYP"/>
<dbReference type="PDBsum" id="5UYQ"/>
<dbReference type="PDBsum" id="5UZ4"/>
<dbReference type="PDBsum" id="5WDT"/>
<dbReference type="PDBsum" id="5WE4"/>
<dbReference type="PDBsum" id="5WE6"/>
<dbReference type="PDBsum" id="5WF0"/>
<dbReference type="PDBsum" id="5WFK"/>
<dbReference type="PDBsum" id="5WFS"/>
<dbReference type="PDBsum" id="6AWB"/>
<dbReference type="PDBsum" id="6AWC"/>
<dbReference type="PDBsum" id="6AWD"/>
<dbReference type="PDBsum" id="6BU8"/>
<dbReference type="PDBsum" id="6BY1"/>
<dbReference type="PDBsum" id="6C4I"/>
<dbReference type="PDBsum" id="6DNC"/>
<dbReference type="PDBsum" id="6ENF"/>
<dbReference type="PDBsum" id="6ENJ"/>
<dbReference type="PDBsum" id="6ENU"/>
<dbReference type="PDBsum" id="6GWT"/>
<dbReference type="PDBsum" id="6GXM"/>
<dbReference type="PDBsum" id="6GXN"/>
<dbReference type="PDBsum" id="6GXO"/>
<dbReference type="PDBsum" id="6GXP"/>
<dbReference type="PDBsum" id="6H4N"/>
<dbReference type="PDBsum" id="6H58"/>
<dbReference type="PDBsum" id="6HRM"/>
<dbReference type="PDBsum" id="6I7V"/>
<dbReference type="PDBsum" id="6NQB"/>
<dbReference type="PDBsum" id="6O7K"/>
<dbReference type="PDBsum" id="6O9J"/>
<dbReference type="PDBsum" id="6O9K"/>
<dbReference type="PDBsum" id="6OFX"/>
<dbReference type="PDBsum" id="6OG7"/>
<dbReference type="PDBsum" id="6OGF"/>
<dbReference type="PDBsum" id="6OGG"/>
<dbReference type="PDBsum" id="6OGI"/>
<dbReference type="PDBsum" id="6OM6"/>
<dbReference type="PDBsum" id="6ORE"/>
<dbReference type="PDBsum" id="6ORL"/>
<dbReference type="PDBsum" id="6OSK"/>
<dbReference type="PDBsum" id="6OSQ"/>
<dbReference type="PDBsum" id="6OST"/>
<dbReference type="PDBsum" id="6OT3"/>
<dbReference type="PDBsum" id="6OUO"/>
<dbReference type="PDBsum" id="6Q97"/>
<dbReference type="PDBsum" id="6Q98"/>
<dbReference type="PDBsum" id="6Q9A"/>
<dbReference type="PDBsum" id="6SZS"/>
<dbReference type="PDBsum" id="6TBV"/>
<dbReference type="PDBsum" id="6TC3"/>
<dbReference type="PDBsum" id="6VU3"/>
<dbReference type="PDBsum" id="6VWL"/>
<dbReference type="PDBsum" id="6VWM"/>
<dbReference type="PDBsum" id="6VWN"/>
<dbReference type="PDBsum" id="6VYQ"/>
<dbReference type="PDBsum" id="6VYR"/>
<dbReference type="PDBsum" id="6VYS"/>
<dbReference type="PDBsum" id="6VYT"/>
<dbReference type="PDBsum" id="6VYU"/>
<dbReference type="PDBsum" id="6VYW"/>
<dbReference type="PDBsum" id="6VYX"/>
<dbReference type="PDBsum" id="6VYY"/>
<dbReference type="PDBsum" id="6VYZ"/>
<dbReference type="PDBsum" id="6VZ2"/>
<dbReference type="PDBsum" id="6VZ3"/>
<dbReference type="PDBsum" id="6VZ5"/>
<dbReference type="PDBsum" id="6VZ7"/>
<dbReference type="PDBsum" id="6VZJ"/>
<dbReference type="PDBsum" id="6W6K"/>
<dbReference type="PDBsum" id="6W77"/>
<dbReference type="PDBsum" id="6W7M"/>
<dbReference type="PDBsum" id="6W7N"/>
<dbReference type="PDBsum" id="6W7W"/>
<dbReference type="PDBsum" id="6WD0"/>
<dbReference type="PDBsum" id="6WD1"/>
<dbReference type="PDBsum" id="6WD2"/>
<dbReference type="PDBsum" id="6WD3"/>
<dbReference type="PDBsum" id="6WD4"/>
<dbReference type="PDBsum" id="6WD5"/>
<dbReference type="PDBsum" id="6WD6"/>
<dbReference type="PDBsum" id="6WD7"/>
<dbReference type="PDBsum" id="6WD8"/>
<dbReference type="PDBsum" id="6WD9"/>
<dbReference type="PDBsum" id="6WDA"/>
<dbReference type="PDBsum" id="6WDB"/>
<dbReference type="PDBsum" id="6WDC"/>
<dbReference type="PDBsum" id="6WDD"/>
<dbReference type="PDBsum" id="6WDE"/>
<dbReference type="PDBsum" id="6WDF"/>
<dbReference type="PDBsum" id="6WDG"/>
<dbReference type="PDBsum" id="6WDH"/>
<dbReference type="PDBsum" id="6WDI"/>
<dbReference type="PDBsum" id="6WDJ"/>
<dbReference type="PDBsum" id="6WDK"/>
<dbReference type="PDBsum" id="6WDL"/>
<dbReference type="PDBsum" id="6WDM"/>
<dbReference type="PDBsum" id="6WNV"/>
<dbReference type="PDBsum" id="6WNW"/>
<dbReference type="PDBsum" id="6X6T"/>
<dbReference type="PDBsum" id="6X7F"/>
<dbReference type="PDBsum" id="6X7K"/>
<dbReference type="PDBsum" id="6X9Q"/>
<dbReference type="PDBsum" id="6XDQ"/>
<dbReference type="PDBsum" id="6XDR"/>
<dbReference type="PDBsum" id="6XE0"/>
<dbReference type="PDBsum" id="6XGF"/>
<dbReference type="PDBsum" id="6XII"/>
<dbReference type="PDBsum" id="6XIJ"/>
<dbReference type="PDBsum" id="6XZA"/>
<dbReference type="PDBsum" id="6XZB"/>
<dbReference type="PDBsum" id="6Y69"/>
<dbReference type="PDBsum" id="6ZTJ"/>
<dbReference type="PDBsum" id="6ZTL"/>
<dbReference type="PDBsum" id="6ZTM"/>
<dbReference type="PDBsum" id="6ZTN"/>
<dbReference type="PDBsum" id="6ZTO"/>
<dbReference type="PDBsum" id="6ZTP"/>
<dbReference type="PDBsum" id="6ZU1"/>
<dbReference type="PDBsum" id="7ABZ"/>
<dbReference type="PDBsum" id="7AC7"/>
<dbReference type="PDBsum" id="7ACJ"/>
<dbReference type="PDBsum" id="7ACR"/>
<dbReference type="PDBsum" id="7AFI"/>
<dbReference type="PDBsum" id="7AFL"/>
<dbReference type="PDBsum" id="7AFO"/>
<dbReference type="PDBsum" id="7B5K"/>
<dbReference type="PDBsum" id="7BOD"/>
<dbReference type="PDBsum" id="7BOE"/>
<dbReference type="PDBsum" id="7BOF"/>
<dbReference type="PDBsum" id="7BOG"/>
<dbReference type="PDBsum" id="7BOH"/>
<dbReference type="PDBsum" id="7BOI"/>
<dbReference type="PDBsum" id="7D6Z"/>
<dbReference type="PDBsum" id="7D80"/>
<dbReference type="PDBsum" id="7JSS"/>
<dbReference type="PDBsum" id="7JSW"/>
<dbReference type="PDBsum" id="7JSZ"/>
<dbReference type="PDBsum" id="7JT1"/>
<dbReference type="PDBsum" id="7JT2"/>
<dbReference type="PDBsum" id="7JT3"/>
<dbReference type="PDBsum" id="7K00"/>
<dbReference type="PDBsum" id="7K50"/>
<dbReference type="PDBsum" id="7K51"/>
<dbReference type="PDBsum" id="7K52"/>
<dbReference type="PDBsum" id="7K53"/>
<dbReference type="PDBsum" id="7K54"/>
<dbReference type="PDBsum" id="7K55"/>
<dbReference type="PDBsum" id="7LV0"/>
<dbReference type="PDBsum" id="7M5D"/>
<dbReference type="PDBsum" id="7N1P"/>
<dbReference type="PDBsum" id="7N2C"/>
<dbReference type="PDBsum" id="7N2U"/>
<dbReference type="PDBsum" id="7N2V"/>
<dbReference type="PDBsum" id="7N30"/>
<dbReference type="PDBsum" id="7N31"/>
<dbReference type="PDBsum" id="7NAR"/>
<dbReference type="PDBsum" id="7NAS"/>
<dbReference type="PDBsum" id="7NAT"/>
<dbReference type="PDBsum" id="7NAU"/>
<dbReference type="PDBsum" id="7NAV"/>
<dbReference type="PDBsum" id="7NAX"/>
<dbReference type="PDBsum" id="7NBU"/>
<dbReference type="PDBsum" id="7O19"/>
<dbReference type="PDBsum" id="7O1A"/>
<dbReference type="PDBsum" id="7O1C"/>
<dbReference type="PDBsum" id="7O5H"/>
<dbReference type="PDBsum" id="7OE0"/>
<dbReference type="PDBsum" id="7OE1"/>
<dbReference type="PDBsum" id="7OI0"/>
<dbReference type="PDBsum" id="7OIZ"/>
<dbReference type="PDBsum" id="7OJ0"/>
<dbReference type="PDBsum" id="7P3K"/>
<dbReference type="PDBsum" id="7PJU"/>
<dbReference type="PDBsum" id="7PJV"/>
<dbReference type="PDBsum" id="7PJY"/>
<dbReference type="PDBsum" id="7QG8"/>
<dbReference type="PDBsum" id="7QGH"/>
<dbReference type="PDBsum" id="7QGN"/>
<dbReference type="PDBsum" id="7QGR"/>
<dbReference type="PDBsum" id="7S1G"/>
<dbReference type="PDBsum" id="7S1H"/>
<dbReference type="PDBsum" id="7S1I"/>
<dbReference type="PDBsum" id="7S1J"/>
<dbReference type="PDBsum" id="7S1K"/>
<dbReference type="PDBsum" id="7SA4"/>
<dbReference type="PDBsum" id="7SS9"/>
<dbReference type="PDBsum" id="7SSD"/>
<dbReference type="PDBsum" id="7SSL"/>
<dbReference type="PDBsum" id="7SSN"/>
<dbReference type="PDBsum" id="7SSO"/>
<dbReference type="PDBsum" id="7SSW"/>
<dbReference type="PDBsum" id="7ST2"/>
<dbReference type="PDBsum" id="7ST6"/>
<dbReference type="PDBsum" id="7ST7"/>
<dbReference type="PDBsum" id="7TOS"/>
<dbReference type="PDBsum" id="7UG7"/>
<dbReference type="PDBsum" id="7UPH"/>
<dbReference type="PDBsum" id="7Y7C"/>
<dbReference type="PDBsum" id="7Y7D"/>
<dbReference type="PDBsum" id="7Y7E"/>
<dbReference type="PDBsum" id="7Y7F"/>
<dbReference type="PDBsum" id="7Y7G"/>
<dbReference type="PDBsum" id="7Y7H"/>
<dbReference type="PDBsum" id="7ZTA"/>
<dbReference type="PDBsum" id="8A3L"/>
<dbReference type="PDBsum" id="8AKN"/>
<dbReference type="PDBsum" id="8AM9"/>
<dbReference type="PDBsum" id="8AYE"/>
<dbReference type="PDBsum" id="8B0X"/>
<dbReference type="PDBsum" id="8B7Y"/>
<dbReference type="PDBsum" id="8BF7"/>
<dbReference type="PDBsum" id="8BGE"/>
<dbReference type="PDBsum" id="8BGH"/>
<dbReference type="PDBsum" id="8BH4"/>
<dbReference type="PDBsum" id="8BHJ"/>
<dbReference type="PDBsum" id="8BHL"/>
<dbReference type="PDBsum" id="8BHN"/>
<dbReference type="PDBsum" id="8BHP"/>
<dbReference type="PDBsum" id="8BIL"/>
<dbReference type="PDBsum" id="8BIM"/>
<dbReference type="PDBsum" id="8CAI"/>
<dbReference type="PDBsum" id="8CEP"/>
<dbReference type="PDBsum" id="8CGJ"/>
<dbReference type="PDBsum" id="8CGR"/>
<dbReference type="PDBsum" id="8CGU"/>
<dbReference type="PDBsum" id="8EIU"/>
<dbReference type="PDBsum" id="8EKC"/>
<dbReference type="PDBsum" id="8EMM"/>
<dbReference type="PDBsum" id="8EYQ"/>
<dbReference type="PDBsum" id="8EYT"/>
<dbReference type="PDBsum" id="8FIZ"/>
<dbReference type="PDBsum" id="8FTO"/>
<dbReference type="PDBsum" id="8FZD"/>
<dbReference type="PDBsum" id="8FZE"/>
<dbReference type="PDBsum" id="8FZF"/>
<dbReference type="PDBsum" id="8FZG"/>
<dbReference type="PDBsum" id="8FZH"/>
<dbReference type="PDBsum" id="8FZI"/>
<dbReference type="PDBsum" id="8FZJ"/>
<dbReference type="PDBsum" id="8G2U"/>
<dbReference type="PDBsum" id="8G31"/>
<dbReference type="PDBsum" id="8G34"/>
<dbReference type="PDBsum" id="8G38"/>
<dbReference type="PDBsum" id="8G6W"/>
<dbReference type="PDBsum" id="8G7P"/>
<dbReference type="PDBsum" id="8G7Q"/>
<dbReference type="PDBsum" id="8G7R"/>
<dbReference type="PDBsum" id="8G7S"/>
<dbReference type="PDBsum" id="8GHU"/>
<dbReference type="PDBsum" id="8HSP"/>
<dbReference type="PDBsum" id="8HTZ"/>
<dbReference type="PDBsum" id="8HU1"/>
<dbReference type="PDBsum" id="8IFB"/>
<dbReference type="PDBsum" id="8IFC"/>
<dbReference type="PDBsum" id="8JSG"/>
<dbReference type="PDBsum" id="8JSH"/>
<dbReference type="PDBsum" id="8K3O"/>
<dbReference type="PDBsum" id="8K4E"/>
<dbReference type="PDBsum" id="8P16"/>
<dbReference type="PDBsum" id="8P17"/>
<dbReference type="PDBsum" id="8P18"/>
<dbReference type="PDBsum" id="8PEG"/>
<dbReference type="PDBsum" id="8PHJ"/>
<dbReference type="PDBsum" id="8PKL"/>
<dbReference type="PDBsum" id="8PVA"/>
<dbReference type="PDBsum" id="8Q4F"/>
<dbReference type="PDBsum" id="8QBT"/>
<dbReference type="PDBsum" id="8QK7"/>
<dbReference type="PDBsum" id="8QOA"/>
<dbReference type="PDBsum" id="8R3V"/>
<dbReference type="PDBsum" id="8R6C"/>
<dbReference type="PDBsum" id="8R8M"/>
<dbReference type="PDBsum" id="8RCL"/>
<dbReference type="PDBsum" id="8RCM"/>
<dbReference type="PDBsum" id="8RCS"/>
<dbReference type="PDBsum" id="8RCT"/>
<dbReference type="PDBsum" id="8SYL"/>
<dbReference type="PDBsum" id="8T5D"/>
<dbReference type="PDBsum" id="8T5H"/>
<dbReference type="PDBsum" id="8UPO"/>
<dbReference type="PDBsum" id="8UPR"/>
<dbReference type="PDBsum" id="8UQL"/>
<dbReference type="PDBsum" id="8UQM"/>
<dbReference type="PDBsum" id="8UQP"/>
<dbReference type="PDBsum" id="8UR0"/>
<dbReference type="PDBsum" id="8URH"/>
<dbReference type="PDBsum" id="8URI"/>
<dbReference type="PDBsum" id="8URX"/>
<dbReference type="PDBsum" id="8URY"/>
<dbReference type="PDBsum" id="8VS9"/>
<dbReference type="PDBsum" id="8VSA"/>
<dbReference type="PDBsum" id="8YUO"/>
<dbReference type="PDBsum" id="8YUP"/>
<dbReference type="PDBsum" id="8YUQ"/>
<dbReference type="PDBsum" id="8YUR"/>
<dbReference type="PDBsum" id="8YUS"/>
<dbReference type="PDBsum" id="9DUK"/>
<dbReference type="PDBsum" id="9DUL"/>
<dbReference type="PDBsum" id="9FBV"/>
<dbReference type="PDBsum" id="9GFT"/>
<dbReference type="PDBsum" id="9GGR"/>
<dbReference type="PDBsum" id="9GUP"/>
<dbReference type="PDBsum" id="9GUQ"/>
<dbReference type="PDBsum" id="9GUS"/>
<dbReference type="PDBsum" id="9GUT"/>
<dbReference type="PDBsum" id="9GUU"/>
<dbReference type="PDBsum" id="9GUV"/>
<dbReference type="PDBsum" id="9GUW"/>
<dbReference type="PDBsum" id="9GUX"/>
<dbReference type="PDBsum" id="9MOR"/>
<dbReference type="PDBsum" id="9MQ4"/>
<dbReference type="EMDB" id="EMD-0076"/>
<dbReference type="EMDB" id="EMD-0080"/>
<dbReference type="EMDB" id="EMD-0081"/>
<dbReference type="EMDB" id="EMD-0082"/>
<dbReference type="EMDB" id="EMD-0083"/>
<dbReference type="EMDB" id="EMD-0137"/>
<dbReference type="EMDB" id="EMD-0139"/>
<dbReference type="EMDB" id="EMD-0261"/>
<dbReference type="EMDB" id="EMD-10353"/>
<dbReference type="EMDB" id="EMD-10453"/>
<dbReference type="EMDB" id="EMD-10458"/>
<dbReference type="EMDB" id="EMD-10656"/>
<dbReference type="EMDB" id="EMD-10657"/>
<dbReference type="EMDB" id="EMD-10705"/>
<dbReference type="EMDB" id="EMD-11419"/>
<dbReference type="EMDB" id="EMD-11710"/>
<dbReference type="EMDB" id="EMD-11713"/>
<dbReference type="EMDB" id="EMD-11717"/>
<dbReference type="EMDB" id="EMD-11718"/>
<dbReference type="EMDB" id="EMD-12035"/>
<dbReference type="EMDB" id="EMD-12239"/>
<dbReference type="EMDB" id="EMD-12240"/>
<dbReference type="EMDB" id="EMD-12241"/>
<dbReference type="EMDB" id="EMD-12242"/>
<dbReference type="EMDB" id="EMD-12243"/>
<dbReference type="EMDB" id="EMD-12244"/>
<dbReference type="EMDB" id="EMD-12245"/>
<dbReference type="EMDB" id="EMD-12246"/>
<dbReference type="EMDB" id="EMD-12247"/>
<dbReference type="EMDB" id="EMD-12248"/>
<dbReference type="EMDB" id="EMD-12249"/>
<dbReference type="EMDB" id="EMD-12261"/>
<dbReference type="EMDB" id="EMD-12693"/>
<dbReference type="EMDB" id="EMD-12694"/>
<dbReference type="EMDB" id="EMD-12695"/>
<dbReference type="EMDB" id="EMD-12936"/>
<dbReference type="EMDB" id="EMD-12937"/>
<dbReference type="EMDB" id="EMD-13180"/>
<dbReference type="EMDB" id="EMD-13461"/>
<dbReference type="EMDB" id="EMD-13464"/>
<dbReference type="EMDB" id="EMD-13952"/>
<dbReference type="EMDB" id="EMD-13955"/>
<dbReference type="EMDB" id="EMD-14956"/>
<dbReference type="EMDB" id="EMD-15116"/>
<dbReference type="EMDB" id="EMD-15712"/>
<dbReference type="EMDB" id="EMD-15793"/>
<dbReference type="EMDB" id="EMD-15905"/>
<dbReference type="EMDB" id="EMD-16015"/>
<dbReference type="EMDB" id="EMD-16029"/>
<dbReference type="EMDB" id="EMD-16031"/>
<dbReference type="EMDB" id="EMD-16047"/>
<dbReference type="EMDB" id="EMD-16057"/>
<dbReference type="EMDB" id="EMD-16059"/>
<dbReference type="EMDB" id="EMD-16062"/>
<dbReference type="EMDB" id="EMD-16065"/>
<dbReference type="EMDB" id="EMD-16081"/>
<dbReference type="EMDB" id="EMD-16082"/>
<dbReference type="EMDB" id="EMD-16526"/>
<dbReference type="EMDB" id="EMD-16612"/>
<dbReference type="EMDB" id="EMD-16645"/>
<dbReference type="EMDB" id="EMD-16650"/>
<dbReference type="EMDB" id="EMD-16651"/>
<dbReference type="EMDB" id="EMD-17346"/>
<dbReference type="EMDB" id="EMD-17347"/>
<dbReference type="EMDB" id="EMD-17348"/>
<dbReference type="EMDB" id="EMD-17631"/>
<dbReference type="EMDB" id="EMD-17667"/>
<dbReference type="EMDB" id="EMD-17743"/>
<dbReference type="EMDB" id="EMD-17959"/>
<dbReference type="EMDB" id="EMD-18145"/>
<dbReference type="EMDB" id="EMD-18320"/>
<dbReference type="EMDB" id="EMD-18458"/>
<dbReference type="EMDB" id="EMD-18534"/>
<dbReference type="EMDB" id="EMD-18875"/>
<dbReference type="EMDB" id="EMD-18950"/>
<dbReference type="EMDB" id="EMD-19004"/>
<dbReference type="EMDB" id="EMD-19054"/>
<dbReference type="EMDB" id="EMD-19055"/>
<dbReference type="EMDB" id="EMD-19058"/>
<dbReference type="EMDB" id="EMD-19059"/>
<dbReference type="EMDB" id="EMD-20048"/>
<dbReference type="EMDB" id="EMD-20052"/>
<dbReference type="EMDB" id="EMD-21420"/>
<dbReference type="EMDB" id="EMD-21421"/>
<dbReference type="EMDB" id="EMD-21422"/>
<dbReference type="EMDB" id="EMD-21558"/>
<dbReference type="EMDB" id="EMD-21569"/>
<dbReference type="EMDB" id="EMD-21571"/>
<dbReference type="EMDB" id="EMD-21572"/>
<dbReference type="EMDB" id="EMD-21573"/>
<dbReference type="EMDB" id="EMD-21625"/>
<dbReference type="EMDB" id="EMD-21630"/>
<dbReference type="EMDB" id="EMD-21631"/>
<dbReference type="EMDB" id="EMD-21632"/>
<dbReference type="EMDB" id="EMD-21633"/>
<dbReference type="EMDB" id="EMD-21634"/>
<dbReference type="EMDB" id="EMD-21635"/>
<dbReference type="EMDB" id="EMD-21636"/>
<dbReference type="EMDB" id="EMD-21637"/>
<dbReference type="EMDB" id="EMD-21638"/>
<dbReference type="EMDB" id="EMD-21639"/>
<dbReference type="EMDB" id="EMD-21640"/>
<dbReference type="EMDB" id="EMD-21641"/>
<dbReference type="EMDB" id="EMD-21857"/>
<dbReference type="EMDB" id="EMD-21858"/>
<dbReference type="EMDB" id="EMD-22143"/>
<dbReference type="EMDB" id="EMD-22459"/>
<dbReference type="EMDB" id="EMD-22461"/>
<dbReference type="EMDB" id="EMD-22464"/>
<dbReference type="EMDB" id="EMD-22466"/>
<dbReference type="EMDB" id="EMD-22469"/>
<dbReference type="EMDB" id="EMD-22472"/>
<dbReference type="EMDB" id="EMD-22669"/>
<dbReference type="EMDB" id="EMD-22670"/>
<dbReference type="EMDB" id="EMD-22671"/>
<dbReference type="EMDB" id="EMD-22672"/>
<dbReference type="EMDB" id="EMD-22673"/>
<dbReference type="EMDB" id="EMD-22674"/>
<dbReference type="EMDB" id="EMD-23528"/>
<dbReference type="EMDB" id="EMD-24120"/>
<dbReference type="EMDB" id="EMD-24132"/>
<dbReference type="EMDB" id="EMD-24133"/>
<dbReference type="EMDB" id="EMD-24134"/>
<dbReference type="EMDB" id="EMD-24135"/>
<dbReference type="EMDB" id="EMD-24136"/>
<dbReference type="EMDB" id="EMD-24803"/>
<dbReference type="EMDB" id="EMD-25405"/>
<dbReference type="EMDB" id="EMD-25407"/>
<dbReference type="EMDB" id="EMD-25409"/>
<dbReference type="EMDB" id="EMD-25410"/>
<dbReference type="EMDB" id="EMD-25411"/>
<dbReference type="EMDB" id="EMD-25415"/>
<dbReference type="EMDB" id="EMD-25418"/>
<dbReference type="EMDB" id="EMD-25420"/>
<dbReference type="EMDB" id="EMD-25421"/>
<dbReference type="EMDB" id="EMD-30598"/>
<dbReference type="EMDB" id="EMD-30611"/>
<dbReference type="EMDB" id="EMD-33660"/>
<dbReference type="EMDB" id="EMD-33661"/>
<dbReference type="EMDB" id="EMD-33662"/>
<dbReference type="EMDB" id="EMD-33663"/>
<dbReference type="EMDB" id="EMD-33664"/>
<dbReference type="EMDB" id="EMD-33665"/>
<dbReference type="EMDB" id="EMD-3489"/>
<dbReference type="EMDB" id="EMD-3490"/>
<dbReference type="EMDB" id="EMD-3492"/>
<dbReference type="EMDB" id="EMD-3493"/>
<dbReference type="EMDB" id="EMD-3494"/>
<dbReference type="EMDB" id="EMD-3495"/>
<dbReference type="EMDB" id="EMD-35001"/>
<dbReference type="EMDB" id="EMD-35020"/>
<dbReference type="EMDB" id="EMD-35022"/>
<dbReference type="EMDB" id="EMD-3508"/>
<dbReference type="EMDB" id="EMD-35411"/>
<dbReference type="EMDB" id="EMD-35412"/>
<dbReference type="EMDB" id="EMD-3580"/>
<dbReference type="EMDB" id="EMD-3661"/>
<dbReference type="EMDB" id="EMD-36619"/>
<dbReference type="EMDB" id="EMD-3662"/>
<dbReference type="EMDB" id="EMD-36620"/>
<dbReference type="EMDB" id="EMD-3663"/>
<dbReference type="EMDB" id="EMD-36854"/>
<dbReference type="EMDB" id="EMD-36883"/>
<dbReference type="EMDB" id="EMD-3713"/>
<dbReference type="EMDB" id="EMD-3730"/>
<dbReference type="EMDB" id="EMD-3898"/>
<dbReference type="EMDB" id="EMD-3899"/>
<dbReference type="EMDB" id="EMD-3903"/>
<dbReference type="EMDB" id="EMD-39577"/>
<dbReference type="EMDB" id="EMD-39578"/>
<dbReference type="EMDB" id="EMD-39579"/>
<dbReference type="EMDB" id="EMD-39580"/>
<dbReference type="EMDB" id="EMD-39581"/>
<dbReference type="EMDB" id="EMD-4001"/>
<dbReference type="EMDB" id="EMD-4121"/>
<dbReference type="EMDB" id="EMD-4122"/>
<dbReference type="EMDB" id="EMD-4123"/>
<dbReference type="EMDB" id="EMD-4124"/>
<dbReference type="EMDB" id="EMD-4125"/>
<dbReference type="EMDB" id="EMD-4126"/>
<dbReference type="EMDB" id="EMD-4476"/>
<dbReference type="EMDB" id="EMD-4477"/>
<dbReference type="EMDB" id="EMD-4478"/>
<dbReference type="EMDB" id="EMD-50296"/>
<dbReference type="EMDB" id="EMD-51318"/>
<dbReference type="EMDB" id="EMD-51340"/>
<dbReference type="EMDB" id="EMD-51615"/>
<dbReference type="EMDB" id="EMD-51616"/>
<dbReference type="EMDB" id="EMD-51618"/>
<dbReference type="EMDB" id="EMD-51619"/>
<dbReference type="EMDB" id="EMD-51620"/>
<dbReference type="EMDB" id="EMD-51621"/>
<dbReference type="EMDB" id="EMD-51622"/>
<dbReference type="EMDB" id="EMD-51623"/>
<dbReference type="EMDB" id="EMD-6667"/>
<dbReference type="EMDB" id="EMD-7289"/>
<dbReference type="EMDB" id="EMD-7341"/>
<dbReference type="EMDB" id="EMD-8107"/>
<dbReference type="EMDB" id="EMD-8175"/>
<dbReference type="EMDB" id="EMD-8176"/>
<dbReference type="EMDB" id="EMD-8237"/>
<dbReference type="EMDB" id="EMD-8238"/>
<dbReference type="EMDB" id="EMD-8279"/>
<dbReference type="EMDB" id="EMD-8280"/>
<dbReference type="EMDB" id="EMD-8281"/>
<dbReference type="EMDB" id="EMD-8282"/>
<dbReference type="EMDB" id="EMD-8505"/>
<dbReference type="EMDB" id="EMD-8615"/>
<dbReference type="EMDB" id="EMD-8616"/>
<dbReference type="EMDB" id="EMD-8617"/>
<dbReference type="EMDB" id="EMD-8618"/>
<dbReference type="EMDB" id="EMD-8619"/>
<dbReference type="EMDB" id="EMD-8620"/>
<dbReference type="EMDB" id="EMD-8813"/>
<dbReference type="EMDB" id="EMD-8814"/>
<dbReference type="EMDB" id="EMD-8815"/>
<dbReference type="EMDB" id="EMD-8828"/>
<dbReference type="SMR" id="P0AG63"/>
<dbReference type="BioGRID" id="4263385">
    <property type="interactions" value="1"/>
</dbReference>
<dbReference type="BioGRID" id="852120">
    <property type="interactions" value="1"/>
</dbReference>
<dbReference type="ComplexPortal" id="CPX-3802">
    <property type="entry name" value="30S small ribosomal subunit"/>
</dbReference>
<dbReference type="DIP" id="DIP-47952N"/>
<dbReference type="FunCoup" id="P0AG63">
    <property type="interactions" value="567"/>
</dbReference>
<dbReference type="IntAct" id="P0AG63">
    <property type="interactions" value="18"/>
</dbReference>
<dbReference type="STRING" id="511145.b3311"/>
<dbReference type="jPOST" id="P0AG63"/>
<dbReference type="PaxDb" id="511145-b3311"/>
<dbReference type="EnsemblBacteria" id="AAC76336">
    <property type="protein sequence ID" value="AAC76336"/>
    <property type="gene ID" value="b3311"/>
</dbReference>
<dbReference type="GeneID" id="93778676"/>
<dbReference type="GeneID" id="947808"/>
<dbReference type="KEGG" id="ecj:JW3273"/>
<dbReference type="KEGG" id="eco:b3311"/>
<dbReference type="KEGG" id="ecoc:C3026_17995"/>
<dbReference type="PATRIC" id="fig|1411691.4.peg.3420"/>
<dbReference type="EchoBASE" id="EB0909"/>
<dbReference type="eggNOG" id="COG0186">
    <property type="taxonomic scope" value="Bacteria"/>
</dbReference>
<dbReference type="HOGENOM" id="CLU_073626_1_1_6"/>
<dbReference type="InParanoid" id="P0AG63"/>
<dbReference type="OMA" id="HPMYGKF"/>
<dbReference type="OrthoDB" id="9811714at2"/>
<dbReference type="PhylomeDB" id="P0AG63"/>
<dbReference type="BioCyc" id="EcoCyc:EG10916-MONOMER"/>
<dbReference type="BioCyc" id="MetaCyc:EG10916-MONOMER"/>
<dbReference type="EvolutionaryTrace" id="P0AG63"/>
<dbReference type="PRO" id="PR:P0AG63"/>
<dbReference type="Proteomes" id="UP000000625">
    <property type="component" value="Chromosome"/>
</dbReference>
<dbReference type="GO" id="GO:0005737">
    <property type="term" value="C:cytoplasm"/>
    <property type="evidence" value="ECO:0000314"/>
    <property type="project" value="ComplexPortal"/>
</dbReference>
<dbReference type="GO" id="GO:0022627">
    <property type="term" value="C:cytosolic small ribosomal subunit"/>
    <property type="evidence" value="ECO:0000314"/>
    <property type="project" value="CAFA"/>
</dbReference>
<dbReference type="GO" id="GO:0019843">
    <property type="term" value="F:rRNA binding"/>
    <property type="evidence" value="ECO:0000314"/>
    <property type="project" value="EcoliWiki"/>
</dbReference>
<dbReference type="GO" id="GO:0070181">
    <property type="term" value="F:small ribosomal subunit rRNA binding"/>
    <property type="evidence" value="ECO:0000314"/>
    <property type="project" value="EcoliWiki"/>
</dbReference>
<dbReference type="GO" id="GO:0003735">
    <property type="term" value="F:structural constituent of ribosome"/>
    <property type="evidence" value="ECO:0000314"/>
    <property type="project" value="CAFA"/>
</dbReference>
<dbReference type="GO" id="GO:0008270">
    <property type="term" value="F:zinc ion binding"/>
    <property type="evidence" value="ECO:0000314"/>
    <property type="project" value="EcoCyc"/>
</dbReference>
<dbReference type="GO" id="GO:0002181">
    <property type="term" value="P:cytoplasmic translation"/>
    <property type="evidence" value="ECO:0000303"/>
    <property type="project" value="ComplexPortal"/>
</dbReference>
<dbReference type="GO" id="GO:0046677">
    <property type="term" value="P:response to antibiotic"/>
    <property type="evidence" value="ECO:0000315"/>
    <property type="project" value="EcoliWiki"/>
</dbReference>
<dbReference type="GO" id="GO:0000028">
    <property type="term" value="P:ribosomal small subunit assembly"/>
    <property type="evidence" value="ECO:0000314"/>
    <property type="project" value="CAFA"/>
</dbReference>
<dbReference type="CDD" id="cd00364">
    <property type="entry name" value="Ribosomal_uS17"/>
    <property type="match status" value="1"/>
</dbReference>
<dbReference type="FunFam" id="2.40.50.140:FF:000014">
    <property type="entry name" value="30S ribosomal protein S17"/>
    <property type="match status" value="1"/>
</dbReference>
<dbReference type="Gene3D" id="2.40.50.140">
    <property type="entry name" value="Nucleic acid-binding proteins"/>
    <property type="match status" value="1"/>
</dbReference>
<dbReference type="HAMAP" id="MF_01345_B">
    <property type="entry name" value="Ribosomal_uS17_B"/>
    <property type="match status" value="1"/>
</dbReference>
<dbReference type="InterPro" id="IPR012340">
    <property type="entry name" value="NA-bd_OB-fold"/>
</dbReference>
<dbReference type="InterPro" id="IPR000266">
    <property type="entry name" value="Ribosomal_uS17"/>
</dbReference>
<dbReference type="InterPro" id="IPR019984">
    <property type="entry name" value="Ribosomal_uS17_bact/chlr"/>
</dbReference>
<dbReference type="InterPro" id="IPR019979">
    <property type="entry name" value="Ribosomal_uS17_CS"/>
</dbReference>
<dbReference type="NCBIfam" id="NF004123">
    <property type="entry name" value="PRK05610.1"/>
    <property type="match status" value="1"/>
</dbReference>
<dbReference type="NCBIfam" id="TIGR03635">
    <property type="entry name" value="uS17_bact"/>
    <property type="match status" value="1"/>
</dbReference>
<dbReference type="PANTHER" id="PTHR10744">
    <property type="entry name" value="40S RIBOSOMAL PROTEIN S11 FAMILY MEMBER"/>
    <property type="match status" value="1"/>
</dbReference>
<dbReference type="PANTHER" id="PTHR10744:SF1">
    <property type="entry name" value="SMALL RIBOSOMAL SUBUNIT PROTEIN US17M"/>
    <property type="match status" value="1"/>
</dbReference>
<dbReference type="Pfam" id="PF00366">
    <property type="entry name" value="Ribosomal_S17"/>
    <property type="match status" value="1"/>
</dbReference>
<dbReference type="PRINTS" id="PR00973">
    <property type="entry name" value="RIBOSOMALS17"/>
</dbReference>
<dbReference type="SUPFAM" id="SSF50249">
    <property type="entry name" value="Nucleic acid-binding proteins"/>
    <property type="match status" value="1"/>
</dbReference>
<dbReference type="PROSITE" id="PS00056">
    <property type="entry name" value="RIBOSOMAL_S17"/>
    <property type="match status" value="1"/>
</dbReference>
<accession>P0AG63</accession>
<accession>P02373</accession>
<accession>Q2M6X6</accession>
<keyword id="KW-0002">3D-structure</keyword>
<keyword id="KW-0046">Antibiotic resistance</keyword>
<keyword id="KW-0903">Direct protein sequencing</keyword>
<keyword id="KW-1185">Reference proteome</keyword>
<keyword id="KW-0687">Ribonucleoprotein</keyword>
<keyword id="KW-0689">Ribosomal protein</keyword>
<keyword id="KW-0694">RNA-binding</keyword>
<keyword id="KW-0699">rRNA-binding</keyword>
<name>RS17_ECOLI</name>
<organism>
    <name type="scientific">Escherichia coli (strain K12)</name>
    <dbReference type="NCBI Taxonomy" id="83333"/>
    <lineage>
        <taxon>Bacteria</taxon>
        <taxon>Pseudomonadati</taxon>
        <taxon>Pseudomonadota</taxon>
        <taxon>Gammaproteobacteria</taxon>
        <taxon>Enterobacterales</taxon>
        <taxon>Enterobacteriaceae</taxon>
        <taxon>Escherichia</taxon>
    </lineage>
</organism>
<gene>
    <name evidence="1" type="primary">rpsQ</name>
    <name type="synonym">neaA</name>
    <name type="ordered locus">b3311</name>
    <name type="ordered locus">JW3273</name>
</gene>
<reference key="1">
    <citation type="journal article" date="1985" name="Nucleic Acids Res.">
        <title>Structure of the Escherichia coli S10 ribosomal protein operon.</title>
        <authorList>
            <person name="Zurawski G."/>
            <person name="Zurawski S.M."/>
        </authorList>
    </citation>
    <scope>NUCLEOTIDE SEQUENCE [GENOMIC DNA]</scope>
</reference>
<reference key="2">
    <citation type="journal article" date="1997" name="Science">
        <title>The complete genome sequence of Escherichia coli K-12.</title>
        <authorList>
            <person name="Blattner F.R."/>
            <person name="Plunkett G. III"/>
            <person name="Bloch C.A."/>
            <person name="Perna N.T."/>
            <person name="Burland V."/>
            <person name="Riley M."/>
            <person name="Collado-Vides J."/>
            <person name="Glasner J.D."/>
            <person name="Rode C.K."/>
            <person name="Mayhew G.F."/>
            <person name="Gregor J."/>
            <person name="Davis N.W."/>
            <person name="Kirkpatrick H.A."/>
            <person name="Goeden M.A."/>
            <person name="Rose D.J."/>
            <person name="Mau B."/>
            <person name="Shao Y."/>
        </authorList>
    </citation>
    <scope>NUCLEOTIDE SEQUENCE [LARGE SCALE GENOMIC DNA]</scope>
    <source>
        <strain>K12 / MG1655 / ATCC 47076</strain>
    </source>
</reference>
<reference key="3">
    <citation type="journal article" date="2006" name="Mol. Syst. Biol.">
        <title>Highly accurate genome sequences of Escherichia coli K-12 strains MG1655 and W3110.</title>
        <authorList>
            <person name="Hayashi K."/>
            <person name="Morooka N."/>
            <person name="Yamamoto Y."/>
            <person name="Fujita K."/>
            <person name="Isono K."/>
            <person name="Choi S."/>
            <person name="Ohtsubo E."/>
            <person name="Baba T."/>
            <person name="Wanner B.L."/>
            <person name="Mori H."/>
            <person name="Horiuchi T."/>
        </authorList>
    </citation>
    <scope>NUCLEOTIDE SEQUENCE [LARGE SCALE GENOMIC DNA]</scope>
    <source>
        <strain>K12 / W3110 / ATCC 27325 / DSM 5911</strain>
    </source>
</reference>
<reference key="4">
    <citation type="journal article" date="1978" name="FEBS Lett.">
        <title>The primary structure of protein S17 from the small ribosomal subunit of Escherichia coli.</title>
        <authorList>
            <person name="Yaguchi M."/>
            <person name="Wittmann H.G."/>
        </authorList>
    </citation>
    <scope>PROTEIN SEQUENCE OF 2-84</scope>
    <scope>SUBUNIT</scope>
    <source>
        <strain>K</strain>
    </source>
</reference>
<reference key="5">
    <citation type="journal article" date="1978" name="Cell">
        <title>DNA sequences of promoter regions for the str and spc ribosomal protein operons in E. coli.</title>
        <authorList>
            <person name="Post L.E."/>
            <person name="Arfsten A.E."/>
            <person name="Reusser F."/>
            <person name="Nomura M."/>
        </authorList>
    </citation>
    <scope>NUCLEOTIDE SEQUENCE [GENOMIC DNA] OF 61-84</scope>
    <source>
        <strain>K12</strain>
    </source>
</reference>
<reference key="6">
    <citation type="journal article" date="1998" name="FEMS Microbiol. Lett.">
        <title>Small genes/gene-products in Escherichia coli K-12.</title>
        <authorList>
            <person name="Wasinger V.C."/>
            <person name="Humphery-Smith I."/>
        </authorList>
    </citation>
    <scope>PROTEIN SEQUENCE OF 2-11</scope>
    <source>
        <strain>K12</strain>
    </source>
</reference>
<reference key="7">
    <citation type="journal article" date="1995" name="EMBO J.">
        <title>Protein-rRNA binding features and their structural and functional implications in ribosomes as determined by cross-linking studies.</title>
        <authorList>
            <person name="Urlaub H."/>
            <person name="Kruft V."/>
            <person name="Bischof O."/>
            <person name="Mueller E.-C."/>
            <person name="Wittmann-Liebold B."/>
        </authorList>
    </citation>
    <scope>PROTEIN SEQUENCE OF 20-36</scope>
    <scope>SUBUNIT</scope>
    <scope>CROSS-LINKING TO RRNA</scope>
    <source>
        <strain>MRE-600</strain>
    </source>
</reference>
<reference key="8">
    <citation type="journal article" date="1974" name="J. Biol. Chem.">
        <title>Assembly mapping of 30 S ribosomal proteins from Escherichia coli. Further studies.</title>
        <authorList>
            <person name="Held W.A."/>
            <person name="Ballou B."/>
            <person name="Mizushima S."/>
            <person name="Nomura M."/>
        </authorList>
    </citation>
    <scope>IDENTIFICATION AS A PRIMARY 16S RRNA-BINDING PROTEIN</scope>
    <scope>SUBUNIT</scope>
    <scope>ASSEMBLY MAP OF THE 30S SUBUNIT</scope>
    <source>
        <strain>Q13</strain>
    </source>
</reference>
<reference key="9">
    <citation type="journal article" date="1997" name="Electrophoresis">
        <title>Escherichia coli proteome analysis using the gene-protein database.</title>
        <authorList>
            <person name="VanBogelen R.A."/>
            <person name="Abshire K.Z."/>
            <person name="Moldover B."/>
            <person name="Olson E.R."/>
            <person name="Neidhardt F.C."/>
        </authorList>
    </citation>
    <scope>IDENTIFICATION BY 2D-GEL</scope>
</reference>
<reference key="10">
    <citation type="journal article" date="2014" name="Curr. Opin. Struct. Biol.">
        <title>A new system for naming ribosomal proteins.</title>
        <authorList>
            <person name="Ban N."/>
            <person name="Beckmann R."/>
            <person name="Cate J.H.D."/>
            <person name="Dinman J.D."/>
            <person name="Dragon F."/>
            <person name="Ellis S.R."/>
            <person name="Lafontaine D.L.J."/>
            <person name="Lindahl L."/>
            <person name="Liljas A."/>
            <person name="Lipton J.M."/>
            <person name="McAlear M.A."/>
            <person name="Moore P.B."/>
            <person name="Noller H.F."/>
            <person name="Ortega J."/>
            <person name="Panse V.G."/>
            <person name="Ramakrishnan V."/>
            <person name="Spahn C.M.T."/>
            <person name="Steitz T.A."/>
            <person name="Tchorzewski M."/>
            <person name="Tollervey D."/>
            <person name="Warren A.J."/>
            <person name="Williamson J.R."/>
            <person name="Wilson D."/>
            <person name="Yonath A."/>
            <person name="Yusupov M."/>
        </authorList>
    </citation>
    <scope>NOMENCLATURE</scope>
</reference>
<reference key="11">
    <citation type="journal article" date="1979" name="Mol. Gen. Genet.">
        <title>A missense mutation in the gene coding for ribosomal protein S17 (rpsQ) leading to ribosomal assembly defectivity in Escherichia coli.</title>
        <authorList>
            <person name="Herzog A."/>
            <person name="Yaguchi M."/>
            <person name="Cabezon T."/>
            <person name="Corchuelo M.C."/>
            <person name="Petre J."/>
            <person name="Bollen A."/>
        </authorList>
    </citation>
    <scope>THERMOSENSITIVE VARIANT PHE-68 AFFECTS ASSEMBLY</scope>
</reference>
<reference key="12">
    <citation type="journal article" date="1985" name="Eur. J. Biochem.">
        <title>A mutant from Escherichia coli which lacks ribosomal proteins S17 and L29 used to localize these two proteins on the ribosomal surface.</title>
        <authorList>
            <person name="Stoeffler-Meilicke M."/>
            <person name="Dabbs E.R."/>
            <person name="Albrecht-Ehrlich R."/>
            <person name="Stoeffler G."/>
        </authorList>
    </citation>
    <scope>CHARACTERIZATION OF A STRAIN MISSING S17 AND L29</scope>
    <source>
        <strain>AM111</strain>
    </source>
</reference>
<reference key="13">
    <citation type="journal article" date="1999" name="Anal. Biochem.">
        <title>Observation of Escherichia coli ribosomal proteins and their posttranslational modifications by mass spectrometry.</title>
        <authorList>
            <person name="Arnold R.J."/>
            <person name="Reilly J.P."/>
        </authorList>
    </citation>
    <scope>MASS SPECTROMETRY</scope>
    <scope>SUBUNIT</scope>
    <source>
        <strain>K12 / ATCC 25404 / DSM 5698 / NCIMB 11290</strain>
    </source>
</reference>
<reference key="14">
    <citation type="journal article" date="1975" name="J. Mol. Biol.">
        <title>Alteration of ribosomal protein S17 by mutation linked to neamine resistance in Escherichia coli. I. General properties of neaA mutants.</title>
        <authorList>
            <person name="Bollen A."/>
            <person name="Cabezon T."/>
            <person name="de Wilde M."/>
            <person name="Villarroel R."/>
            <person name="Herzog A."/>
        </authorList>
    </citation>
    <scope>ISOLATION</scope>
    <scope>CHARACTERIZATION OF NEAMINE-RESISTANT VARIANT NEA301</scope>
    <source>
        <strain>K12S</strain>
    </source>
</reference>
<reference key="15">
    <citation type="journal article" date="1976" name="J. Mol. Biol.">
        <title>Alteration of ribosomal protein S17 by mutation linked to neamine resistance in Escherichia coli. II. Localization of the amino acid replacement in protein S17 from a meaA mutant.</title>
        <authorList>
            <person name="Yaguchi M."/>
            <person name="Wittmann H.G."/>
            <person name="Cabezon T."/>
            <person name="DeWilde M."/>
            <person name="Villarroel R."/>
            <person name="Herzog A."/>
            <person name="Bollen A."/>
        </authorList>
    </citation>
    <scope>NEAMINE-RESISTANT VARIANT NEA301</scope>
    <source>
        <strain>K12S</strain>
    </source>
</reference>
<reference key="16">
    <citation type="journal article" date="2002" name="Nat. Struct. Biol.">
        <title>All-atom homology model of the Escherichia coli 30S ribosomal subunit.</title>
        <authorList>
            <person name="Tung C.-S."/>
            <person name="Joseph S."/>
            <person name="Sanbonmatsu K.Y."/>
        </authorList>
    </citation>
    <scope>3D-STRUCTURE MODELING</scope>
    <scope>SUBUNIT</scope>
</reference>
<reference key="17">
    <citation type="journal article" date="2003" name="Cell">
        <title>Study of the structural dynamics of the E. coli 70S ribosome using real-space refinement.</title>
        <authorList>
            <person name="Gao H."/>
            <person name="Sengupta J."/>
            <person name="Valle M."/>
            <person name="Korostelev A."/>
            <person name="Eswar N."/>
            <person name="Stagg S.M."/>
            <person name="Van Roey P."/>
            <person name="Agrawal R.K."/>
            <person name="Harvey S.C."/>
            <person name="Sali A."/>
            <person name="Chapman M.S."/>
            <person name="Frank J."/>
        </authorList>
    </citation>
    <scope>STRUCTURE BY ELECTRON MICROSCOPY (11.50 ANGSTROMS)</scope>
    <scope>SUBUNIT</scope>
    <source>
        <strain>MRE-600</strain>
    </source>
</reference>
<reference key="18">
    <citation type="journal article" date="2005" name="Science">
        <title>Structures of the bacterial ribosome at 3.5 A resolution.</title>
        <authorList>
            <person name="Schuwirth B.S."/>
            <person name="Borovinskaya M.A."/>
            <person name="Hau C.W."/>
            <person name="Zhang W."/>
            <person name="Vila-Sanjurjo A."/>
            <person name="Holton J.M."/>
            <person name="Cate J.H.D."/>
        </authorList>
    </citation>
    <scope>X-RAY CRYSTALLOGRAPHY (3.46 ANGSTROMS) OF 2 DIFFERENT RIBOSOME STRUCTURES</scope>
    <scope>SUBUNIT</scope>
    <source>
        <strain>MRE-600</strain>
    </source>
</reference>
<reference key="19">
    <citation type="journal article" date="2017" name="Nature">
        <title>Mechanistic insights into the alternative translation termination by ArfA and RF2.</title>
        <authorList>
            <person name="Ma C."/>
            <person name="Kurita D."/>
            <person name="Li N."/>
            <person name="Chen Y."/>
            <person name="Himeno H."/>
            <person name="Gao N."/>
        </authorList>
    </citation>
    <scope>STRUCTURE BY ELECTRON MICROSCOPY (3.0 ANGSTROMS) OF 70S RIBOSOME IN COMPLEX WITH ARFA AND RF2</scope>
    <scope>SUBUNIT</scope>
</reference>
<reference key="20">
    <citation type="journal article" date="2017" name="Nature">
        <title>Structural basis for ArfA-RF2-mediated translation termination on mRNAs lacking stop codons.</title>
        <authorList>
            <person name="Huter P."/>
            <person name="Mueller C."/>
            <person name="Beckert B."/>
            <person name="Arenz S."/>
            <person name="Berninghausen O."/>
            <person name="Beckmann R."/>
            <person name="Wilson D.N."/>
        </authorList>
    </citation>
    <scope>STRUCTURE BY ELECTRON MICROSCOPY (3.1 ANGSTROMS) OF 70S RIBOSOME IN COMPLEX WITH ARFA AND RF2</scope>
    <scope>SUBUNIT</scope>
</reference>
<reference key="21">
    <citation type="journal article" date="2016" name="Science">
        <title>Translational termination without a stop codon.</title>
        <authorList>
            <person name="James N.R."/>
            <person name="Brown A."/>
            <person name="Gordiyenko Y."/>
            <person name="Ramakrishnan V."/>
        </authorList>
    </citation>
    <scope>STRUCTURE BY ELECTRON MICROSCOPY (2.97 ANGSTROMS) OF 70S RIBOSOME IN COMPLEX WITH ARFA AND RF2</scope>
    <scope>SUBUNIT</scope>
</reference>
<reference key="22">
    <citation type="journal article" date="2017" name="Nature">
        <title>Structural basis of co-translational quality control by ArfA and RF2 bound to ribosome.</title>
        <authorList>
            <person name="Zeng F."/>
            <person name="Chen Y."/>
            <person name="Remis J."/>
            <person name="Shekhar M."/>
            <person name="Phillips J.C."/>
            <person name="Tajkhorshid E."/>
            <person name="Jin H."/>
        </authorList>
    </citation>
    <scope>STRUCTURE BY ELECTRON MICROSCOPY (3.52 ANGSTROMS) OF 70S RIBOSOME IN COMPLEX WITH ARFA AND RF2</scope>
    <scope>SUBUNIT</scope>
</reference>
<evidence type="ECO:0000255" key="1">
    <source>
        <dbReference type="HAMAP-Rule" id="MF_01345"/>
    </source>
</evidence>
<evidence type="ECO:0000269" key="2">
    <source>
    </source>
</evidence>
<evidence type="ECO:0000269" key="3">
    <source>
    </source>
</evidence>
<evidence type="ECO:0000269" key="4">
    <source>
    </source>
</evidence>
<evidence type="ECO:0000269" key="5">
    <source>
    </source>
</evidence>
<evidence type="ECO:0000269" key="6">
    <source>
    </source>
</evidence>
<evidence type="ECO:0000269" key="7">
    <source>
    </source>
</evidence>
<evidence type="ECO:0000269" key="8">
    <source>
    </source>
</evidence>
<evidence type="ECO:0000269" key="9">
    <source>
    </source>
</evidence>
<evidence type="ECO:0000269" key="10">
    <source>
    </source>
</evidence>
<evidence type="ECO:0000269" key="11">
    <source>
    </source>
</evidence>
<evidence type="ECO:0000269" key="12">
    <source>
    </source>
</evidence>
<evidence type="ECO:0000269" key="13">
    <source>
    </source>
</evidence>
<evidence type="ECO:0000269" key="14">
    <source>
    </source>
</evidence>
<evidence type="ECO:0000269" key="15">
    <source>
    </source>
</evidence>
<evidence type="ECO:0000269" key="16">
    <source>
    </source>
</evidence>
<evidence type="ECO:0000303" key="17">
    <source>
    </source>
</evidence>
<evidence type="ECO:0000305" key="18"/>
<evidence type="ECO:0007829" key="19">
    <source>
        <dbReference type="PDB" id="7BOG"/>
    </source>
</evidence>
<evidence type="ECO:0007829" key="20">
    <source>
        <dbReference type="PDB" id="8CGJ"/>
    </source>
</evidence>